<organism>
    <name type="scientific">Homo sapiens</name>
    <name type="common">Human</name>
    <dbReference type="NCBI Taxonomy" id="9606"/>
    <lineage>
        <taxon>Eukaryota</taxon>
        <taxon>Metazoa</taxon>
        <taxon>Chordata</taxon>
        <taxon>Craniata</taxon>
        <taxon>Vertebrata</taxon>
        <taxon>Euteleostomi</taxon>
        <taxon>Mammalia</taxon>
        <taxon>Eutheria</taxon>
        <taxon>Euarchontoglires</taxon>
        <taxon>Primates</taxon>
        <taxon>Haplorrhini</taxon>
        <taxon>Catarrhini</taxon>
        <taxon>Hominidae</taxon>
        <taxon>Homo</taxon>
    </lineage>
</organism>
<proteinExistence type="evidence at protein level"/>
<dbReference type="EC" id="2.7.10.1"/>
<dbReference type="EMBL" id="X04434">
    <property type="protein sequence ID" value="CAA28030.1"/>
    <property type="molecule type" value="mRNA"/>
</dbReference>
<dbReference type="EMBL" id="AB425196">
    <property type="protein sequence ID" value="BAG11657.1"/>
    <property type="status" value="ALT_INIT"/>
    <property type="molecule type" value="mRNA"/>
</dbReference>
<dbReference type="EMBL" id="AY332722">
    <property type="protein sequence ID" value="AAP81165.1"/>
    <property type="molecule type" value="Genomic_DNA"/>
</dbReference>
<dbReference type="EMBL" id="AC055807">
    <property type="status" value="NOT_ANNOTATED_CDS"/>
    <property type="molecule type" value="Genomic_DNA"/>
</dbReference>
<dbReference type="EMBL" id="AC069029">
    <property type="status" value="NOT_ANNOTATED_CDS"/>
    <property type="molecule type" value="Genomic_DNA"/>
</dbReference>
<dbReference type="EMBL" id="AC118658">
    <property type="status" value="NOT_ANNOTATED_CDS"/>
    <property type="molecule type" value="Genomic_DNA"/>
</dbReference>
<dbReference type="EMBL" id="AC118660">
    <property type="status" value="NOT_ANNOTATED_CDS"/>
    <property type="molecule type" value="Genomic_DNA"/>
</dbReference>
<dbReference type="EMBL" id="BC113610">
    <property type="protein sequence ID" value="AAI13611.1"/>
    <property type="molecule type" value="mRNA"/>
</dbReference>
<dbReference type="EMBL" id="BC113612">
    <property type="protein sequence ID" value="AAI13613.1"/>
    <property type="molecule type" value="mRNA"/>
</dbReference>
<dbReference type="EMBL" id="M69229">
    <property type="protein sequence ID" value="AAB59399.1"/>
    <property type="molecule type" value="Genomic_DNA"/>
</dbReference>
<dbReference type="CCDS" id="CCDS10378.1"/>
<dbReference type="PIR" id="A25690">
    <property type="entry name" value="IGHUR1"/>
</dbReference>
<dbReference type="RefSeq" id="NP_000866.1">
    <property type="nucleotide sequence ID" value="NM_000875.5"/>
</dbReference>
<dbReference type="RefSeq" id="NP_001278787.1">
    <property type="nucleotide sequence ID" value="NM_001291858.1"/>
</dbReference>
<dbReference type="RefSeq" id="XP_047288399.1">
    <property type="nucleotide sequence ID" value="XM_047432443.1"/>
</dbReference>
<dbReference type="RefSeq" id="XP_054233806.1">
    <property type="nucleotide sequence ID" value="XM_054377831.1"/>
</dbReference>
<dbReference type="PDB" id="1IGR">
    <property type="method" value="X-ray"/>
    <property type="resolution" value="2.60 A"/>
    <property type="chains" value="A=31-492"/>
</dbReference>
<dbReference type="PDB" id="1JQH">
    <property type="method" value="X-ray"/>
    <property type="resolution" value="2.10 A"/>
    <property type="chains" value="A/B/C=979-1286"/>
</dbReference>
<dbReference type="PDB" id="1K3A">
    <property type="method" value="X-ray"/>
    <property type="resolution" value="2.10 A"/>
    <property type="chains" value="A=988-1286"/>
</dbReference>
<dbReference type="PDB" id="1M7N">
    <property type="method" value="X-ray"/>
    <property type="resolution" value="2.70 A"/>
    <property type="chains" value="A/B=974-1294"/>
</dbReference>
<dbReference type="PDB" id="1P4O">
    <property type="method" value="X-ray"/>
    <property type="resolution" value="1.50 A"/>
    <property type="chains" value="A/B=974-1294"/>
</dbReference>
<dbReference type="PDB" id="2OJ9">
    <property type="method" value="X-ray"/>
    <property type="resolution" value="2.00 A"/>
    <property type="chains" value="A=982-1286"/>
</dbReference>
<dbReference type="PDB" id="2ZM3">
    <property type="method" value="X-ray"/>
    <property type="resolution" value="2.50 A"/>
    <property type="chains" value="A/B/C/D=981-1286"/>
</dbReference>
<dbReference type="PDB" id="3D94">
    <property type="method" value="X-ray"/>
    <property type="resolution" value="2.30 A"/>
    <property type="chains" value="A=986-1286"/>
</dbReference>
<dbReference type="PDB" id="3F5P">
    <property type="method" value="X-ray"/>
    <property type="resolution" value="2.90 A"/>
    <property type="chains" value="A/B/C/D/E/F/G/H/I/J/K/L/M/R/S/T=981-1286"/>
</dbReference>
<dbReference type="PDB" id="3I81">
    <property type="method" value="X-ray"/>
    <property type="resolution" value="2.08 A"/>
    <property type="chains" value="A=982-1286"/>
</dbReference>
<dbReference type="PDB" id="3LVP">
    <property type="method" value="X-ray"/>
    <property type="resolution" value="3.00 A"/>
    <property type="chains" value="A/B/C/D=951-1286"/>
</dbReference>
<dbReference type="PDB" id="3LW0">
    <property type="method" value="X-ray"/>
    <property type="resolution" value="1.79 A"/>
    <property type="chains" value="A/B/C/D=983-1286"/>
</dbReference>
<dbReference type="PDB" id="3NW5">
    <property type="method" value="X-ray"/>
    <property type="resolution" value="2.14 A"/>
    <property type="chains" value="A=982-1286"/>
</dbReference>
<dbReference type="PDB" id="3NW6">
    <property type="method" value="X-ray"/>
    <property type="resolution" value="2.20 A"/>
    <property type="chains" value="A=982-1286"/>
</dbReference>
<dbReference type="PDB" id="3NW7">
    <property type="method" value="X-ray"/>
    <property type="resolution" value="2.11 A"/>
    <property type="chains" value="A=982-1286"/>
</dbReference>
<dbReference type="PDB" id="3O23">
    <property type="method" value="X-ray"/>
    <property type="resolution" value="2.10 A"/>
    <property type="chains" value="A=982-1286"/>
</dbReference>
<dbReference type="PDB" id="3QQU">
    <property type="method" value="X-ray"/>
    <property type="resolution" value="2.90 A"/>
    <property type="chains" value="A/B/C/D=988-1286"/>
</dbReference>
<dbReference type="PDB" id="4D2R">
    <property type="method" value="X-ray"/>
    <property type="resolution" value="2.10 A"/>
    <property type="chains" value="A=985-1286"/>
</dbReference>
<dbReference type="PDB" id="4XSS">
    <property type="method" value="X-ray"/>
    <property type="resolution" value="3.00 A"/>
    <property type="chains" value="F=721-736"/>
</dbReference>
<dbReference type="PDB" id="5FXQ">
    <property type="method" value="X-ray"/>
    <property type="resolution" value="2.30 A"/>
    <property type="chains" value="A=980-1286"/>
</dbReference>
<dbReference type="PDB" id="5FXR">
    <property type="method" value="X-ray"/>
    <property type="resolution" value="2.40 A"/>
    <property type="chains" value="A=980-1286"/>
</dbReference>
<dbReference type="PDB" id="5FXS">
    <property type="method" value="X-ray"/>
    <property type="resolution" value="1.90 A"/>
    <property type="chains" value="A=980-1286"/>
</dbReference>
<dbReference type="PDB" id="5HZN">
    <property type="method" value="X-ray"/>
    <property type="resolution" value="2.20 A"/>
    <property type="chains" value="A/B/C/D/E/F/G/H=983-1286"/>
</dbReference>
<dbReference type="PDB" id="5U8Q">
    <property type="method" value="X-ray"/>
    <property type="resolution" value="3.27 A"/>
    <property type="chains" value="A=31-935"/>
</dbReference>
<dbReference type="PDB" id="5U8R">
    <property type="method" value="X-ray"/>
    <property type="resolution" value="3.00 A"/>
    <property type="chains" value="A=31-935"/>
</dbReference>
<dbReference type="PDB" id="6JK8">
    <property type="method" value="EM"/>
    <property type="resolution" value="4.70 A"/>
    <property type="chains" value="A/B=1-1367"/>
</dbReference>
<dbReference type="PDB" id="6VWG">
    <property type="method" value="EM"/>
    <property type="resolution" value="3.21 A"/>
    <property type="chains" value="A/B=31-935"/>
</dbReference>
<dbReference type="PDB" id="6VWH">
    <property type="method" value="EM"/>
    <property type="resolution" value="4.26 A"/>
    <property type="chains" value="A/B=31-935"/>
</dbReference>
<dbReference type="PDB" id="6VWI">
    <property type="method" value="EM"/>
    <property type="resolution" value="3.70 A"/>
    <property type="chains" value="A/B=31-935"/>
</dbReference>
<dbReference type="PDB" id="6VWJ">
    <property type="method" value="EM"/>
    <property type="resolution" value="4.21 A"/>
    <property type="chains" value="A/B=31-935"/>
</dbReference>
<dbReference type="PDB" id="7PH8">
    <property type="method" value="NMR"/>
    <property type="chains" value="A=932-962"/>
</dbReference>
<dbReference type="PDB" id="7S0Q">
    <property type="method" value="EM"/>
    <property type="resolution" value="3.70 A"/>
    <property type="chains" value="A=31-935"/>
</dbReference>
<dbReference type="PDB" id="7S8V">
    <property type="method" value="EM"/>
    <property type="resolution" value="3.73 A"/>
    <property type="chains" value="A=31-935"/>
</dbReference>
<dbReference type="PDB" id="7U23">
    <property type="method" value="EM"/>
    <property type="resolution" value="4.60 A"/>
    <property type="chains" value="E/F=31-935"/>
</dbReference>
<dbReference type="PDB" id="7V3P">
    <property type="method" value="EM"/>
    <property type="resolution" value="3.60 A"/>
    <property type="chains" value="A/B=1-931"/>
</dbReference>
<dbReference type="PDB" id="7XGD">
    <property type="method" value="EM"/>
    <property type="resolution" value="4.00 A"/>
    <property type="chains" value="A/B=31-927"/>
</dbReference>
<dbReference type="PDB" id="7XLC">
    <property type="method" value="EM"/>
    <property type="resolution" value="5.00 A"/>
    <property type="chains" value="A/B=31-927"/>
</dbReference>
<dbReference type="PDB" id="7YRR">
    <property type="method" value="EM"/>
    <property type="resolution" value="4.30 A"/>
    <property type="chains" value="A/B=31-927"/>
</dbReference>
<dbReference type="PDB" id="8PYI">
    <property type="method" value="X-ray"/>
    <property type="resolution" value="3.06 A"/>
    <property type="chains" value="AAA/BBB/CCC/DDD/EEE/FFF/GGG/HHH=973-1286"/>
</dbReference>
<dbReference type="PDB" id="8PYJ">
    <property type="method" value="X-ray"/>
    <property type="resolution" value="2.70 A"/>
    <property type="chains" value="AAA=973-1286"/>
</dbReference>
<dbReference type="PDB" id="8PYK">
    <property type="method" value="X-ray"/>
    <property type="resolution" value="2.23 A"/>
    <property type="chains" value="AAA=973-1286"/>
</dbReference>
<dbReference type="PDB" id="8PYL">
    <property type="method" value="X-ray"/>
    <property type="resolution" value="2.93 A"/>
    <property type="chains" value="AAA=973-1286"/>
</dbReference>
<dbReference type="PDB" id="8PYM">
    <property type="method" value="X-ray"/>
    <property type="resolution" value="2.65 A"/>
    <property type="chains" value="AAA=973-1286"/>
</dbReference>
<dbReference type="PDB" id="8PYN">
    <property type="method" value="X-ray"/>
    <property type="resolution" value="1.71 A"/>
    <property type="chains" value="AAA=973-1286"/>
</dbReference>
<dbReference type="PDB" id="8TAN">
    <property type="method" value="EM"/>
    <property type="resolution" value="3.05 A"/>
    <property type="chains" value="A/B=31-935"/>
</dbReference>
<dbReference type="PDBsum" id="1IGR"/>
<dbReference type="PDBsum" id="1JQH"/>
<dbReference type="PDBsum" id="1K3A"/>
<dbReference type="PDBsum" id="1M7N"/>
<dbReference type="PDBsum" id="1P4O"/>
<dbReference type="PDBsum" id="2OJ9"/>
<dbReference type="PDBsum" id="2ZM3"/>
<dbReference type="PDBsum" id="3D94"/>
<dbReference type="PDBsum" id="3F5P"/>
<dbReference type="PDBsum" id="3I81"/>
<dbReference type="PDBsum" id="3LVP"/>
<dbReference type="PDBsum" id="3LW0"/>
<dbReference type="PDBsum" id="3NW5"/>
<dbReference type="PDBsum" id="3NW6"/>
<dbReference type="PDBsum" id="3NW7"/>
<dbReference type="PDBsum" id="3O23"/>
<dbReference type="PDBsum" id="3QQU"/>
<dbReference type="PDBsum" id="4D2R"/>
<dbReference type="PDBsum" id="4XSS"/>
<dbReference type="PDBsum" id="5FXQ"/>
<dbReference type="PDBsum" id="5FXR"/>
<dbReference type="PDBsum" id="5FXS"/>
<dbReference type="PDBsum" id="5HZN"/>
<dbReference type="PDBsum" id="5U8Q"/>
<dbReference type="PDBsum" id="5U8R"/>
<dbReference type="PDBsum" id="6JK8"/>
<dbReference type="PDBsum" id="6VWG"/>
<dbReference type="PDBsum" id="6VWH"/>
<dbReference type="PDBsum" id="6VWI"/>
<dbReference type="PDBsum" id="6VWJ"/>
<dbReference type="PDBsum" id="7PH8"/>
<dbReference type="PDBsum" id="7S0Q"/>
<dbReference type="PDBsum" id="7S8V"/>
<dbReference type="PDBsum" id="7U23"/>
<dbReference type="PDBsum" id="7V3P"/>
<dbReference type="PDBsum" id="7XGD"/>
<dbReference type="PDBsum" id="7XLC"/>
<dbReference type="PDBsum" id="7YRR"/>
<dbReference type="PDBsum" id="8PYI"/>
<dbReference type="PDBsum" id="8PYJ"/>
<dbReference type="PDBsum" id="8PYK"/>
<dbReference type="PDBsum" id="8PYL"/>
<dbReference type="PDBsum" id="8PYM"/>
<dbReference type="PDBsum" id="8PYN"/>
<dbReference type="PDBsum" id="8TAN"/>
<dbReference type="EMDB" id="EMD-0741"/>
<dbReference type="EMDB" id="EMD-24791"/>
<dbReference type="EMDB" id="EMD-24927"/>
<dbReference type="EMDB" id="EMD-26306"/>
<dbReference type="EMDB" id="EMD-33186"/>
<dbReference type="EMDB" id="EMD-34065"/>
<dbReference type="EMDB" id="EMD-41138"/>
<dbReference type="EMDB" id="EMD-9838"/>
<dbReference type="SASBDB" id="P08069"/>
<dbReference type="SMR" id="P08069"/>
<dbReference type="BioGRID" id="109701">
    <property type="interactions" value="501"/>
</dbReference>
<dbReference type="DIP" id="DIP-476N"/>
<dbReference type="FunCoup" id="P08069">
    <property type="interactions" value="1810"/>
</dbReference>
<dbReference type="IntAct" id="P08069">
    <property type="interactions" value="373"/>
</dbReference>
<dbReference type="MINT" id="P08069"/>
<dbReference type="STRING" id="9606.ENSP00000497069"/>
<dbReference type="BindingDB" id="P08069"/>
<dbReference type="ChEMBL" id="CHEMBL1957"/>
<dbReference type="DrugBank" id="DB07156">
    <property type="generic name" value="(4Z)-6-bromo-4-({[4-(pyrrolidin-1-ylmethyl)phenyl]amino}methylidene)isoquinoline-1,3(2H,4H)-dione"/>
</dbReference>
<dbReference type="DrugBank" id="DB07474">
    <property type="generic name" value="3-[5-(1H-IMIDAZOL-1-YL)-7-METHYL-1H-BENZIMIDAZOL-2-YL]-4-[(PYRIDIN-2-YLMETHYL)AMINO]PYRIDIN-2(1H)-ONE"/>
</dbReference>
<dbReference type="DrugBank" id="DB05023">
    <property type="generic name" value="ATL1101"/>
</dbReference>
<dbReference type="DrugBank" id="DB15399">
    <property type="generic name" value="BMS-754807"/>
</dbReference>
<dbReference type="DrugBank" id="DB12267">
    <property type="generic name" value="Brigatinib"/>
</dbReference>
<dbReference type="DrugBank" id="DB12250">
    <property type="generic name" value="Cixutumumab"/>
</dbReference>
<dbReference type="DrugBank" id="DB11840">
    <property type="generic name" value="Dalotuzumab"/>
</dbReference>
<dbReference type="DrugBank" id="DB11564">
    <property type="generic name" value="Insulin argine"/>
</dbReference>
<dbReference type="DrugBank" id="DB01306">
    <property type="generic name" value="Insulin aspart"/>
</dbReference>
<dbReference type="DrugBank" id="DB09456">
    <property type="generic name" value="Insulin beef"/>
</dbReference>
<dbReference type="DrugBank" id="DB09564">
    <property type="generic name" value="Insulin degludec"/>
</dbReference>
<dbReference type="DrugBank" id="DB01307">
    <property type="generic name" value="Insulin detemir"/>
</dbReference>
<dbReference type="DrugBank" id="DB00047">
    <property type="generic name" value="Insulin glargine"/>
</dbReference>
<dbReference type="DrugBank" id="DB01309">
    <property type="generic name" value="Insulin glulisine"/>
</dbReference>
<dbReference type="DrugBank" id="DB00030">
    <property type="generic name" value="Insulin human"/>
</dbReference>
<dbReference type="DrugBank" id="DB16693">
    <property type="generic name" value="Insulin icodec"/>
</dbReference>
<dbReference type="DrugBank" id="DB00046">
    <property type="generic name" value="Insulin lispro"/>
</dbReference>
<dbReference type="DrugBank" id="DB11567">
    <property type="generic name" value="Insulin peglispro"/>
</dbReference>
<dbReference type="DrugBank" id="DB00071">
    <property type="generic name" value="Insulin pork"/>
</dbReference>
<dbReference type="DrugBank" id="DB11568">
    <property type="generic name" value="Insulin tregopil"/>
</dbReference>
<dbReference type="DrugBank" id="DB16637">
    <property type="generic name" value="KW-2450 free base"/>
</dbReference>
<dbReference type="DrugBank" id="DB06075">
    <property type="generic name" value="Linsitinib"/>
</dbReference>
<dbReference type="DrugBank" id="DB01277">
    <property type="generic name" value="Mecasermin"/>
</dbReference>
<dbReference type="DrugBank" id="DB14751">
    <property type="generic name" value="Mecasermin rinfabate"/>
</dbReference>
<dbReference type="DrugBank" id="DB08804">
    <property type="generic name" value="Nandrolone decanoate"/>
</dbReference>
<dbReference type="DrugBank" id="DB04395">
    <property type="generic name" value="Phosphoaminophosphonic Acid-Adenylate Ester"/>
</dbReference>
<dbReference type="DrugBank" id="DB12802">
    <property type="generic name" value="Picropodophyllin"/>
</dbReference>
<dbReference type="DrugBank" id="DB05897">
    <property type="generic name" value="rhIGFBP-3"/>
</dbReference>
<dbReference type="DrugBank" id="DB09098">
    <property type="generic name" value="Somatrem"/>
</dbReference>
<dbReference type="DrugBank" id="DB06343">
    <property type="generic name" value="Teprotumumab"/>
</dbReference>
<dbReference type="DrugBank" id="DB05184">
    <property type="generic name" value="XL228"/>
</dbReference>
<dbReference type="DrugCentral" id="P08069"/>
<dbReference type="GuidetoPHARMACOLOGY" id="1801"/>
<dbReference type="GlyCosmos" id="P08069">
    <property type="glycosylation" value="17 sites, 1 glycan"/>
</dbReference>
<dbReference type="GlyGen" id="P08069">
    <property type="glycosylation" value="18 sites, 20 N-linked glycans (7 sites), 1 O-linked glycan (1 site)"/>
</dbReference>
<dbReference type="iPTMnet" id="P08069"/>
<dbReference type="PhosphoSitePlus" id="P08069"/>
<dbReference type="SwissPalm" id="P08069"/>
<dbReference type="BioMuta" id="IGF1R"/>
<dbReference type="DMDM" id="124240"/>
<dbReference type="CPTAC" id="CPTAC-3060"/>
<dbReference type="CPTAC" id="CPTAC-3061"/>
<dbReference type="jPOST" id="P08069"/>
<dbReference type="MassIVE" id="P08069"/>
<dbReference type="PaxDb" id="9606-ENSP00000268035"/>
<dbReference type="PeptideAtlas" id="P08069"/>
<dbReference type="ProteomicsDB" id="52065"/>
<dbReference type="Pumba" id="P08069"/>
<dbReference type="ABCD" id="P08069">
    <property type="antibodies" value="27 sequenced antibodies"/>
</dbReference>
<dbReference type="Antibodypedia" id="4140">
    <property type="antibodies" value="2579 antibodies from 51 providers"/>
</dbReference>
<dbReference type="DNASU" id="3480"/>
<dbReference type="Ensembl" id="ENST00000650285.1">
    <property type="protein sequence ID" value="ENSP00000497069.1"/>
    <property type="gene ID" value="ENSG00000140443.15"/>
</dbReference>
<dbReference type="GeneID" id="3480"/>
<dbReference type="KEGG" id="hsa:3480"/>
<dbReference type="MANE-Select" id="ENST00000650285.1">
    <property type="protein sequence ID" value="ENSP00000497069.1"/>
    <property type="RefSeq nucleotide sequence ID" value="NM_000875.5"/>
    <property type="RefSeq protein sequence ID" value="NP_000866.1"/>
</dbReference>
<dbReference type="UCSC" id="uc002bul.4">
    <property type="organism name" value="human"/>
</dbReference>
<dbReference type="AGR" id="HGNC:5465"/>
<dbReference type="CTD" id="3480"/>
<dbReference type="DisGeNET" id="3480"/>
<dbReference type="GeneCards" id="IGF1R"/>
<dbReference type="HGNC" id="HGNC:5465">
    <property type="gene designation" value="IGF1R"/>
</dbReference>
<dbReference type="HPA" id="ENSG00000140443">
    <property type="expression patterns" value="Low tissue specificity"/>
</dbReference>
<dbReference type="MalaCards" id="IGF1R"/>
<dbReference type="MIM" id="147370">
    <property type="type" value="gene"/>
</dbReference>
<dbReference type="MIM" id="270450">
    <property type="type" value="phenotype"/>
</dbReference>
<dbReference type="neXtProt" id="NX_P08069"/>
<dbReference type="OpenTargets" id="ENSG00000140443"/>
<dbReference type="Orphanet" id="73273">
    <property type="disease" value="Growth delay due to insulin-like growth factor I resistance"/>
</dbReference>
<dbReference type="PharmGKB" id="PA29698"/>
<dbReference type="VEuPathDB" id="HostDB:ENSG00000140443"/>
<dbReference type="eggNOG" id="KOG4258">
    <property type="taxonomic scope" value="Eukaryota"/>
</dbReference>
<dbReference type="GeneTree" id="ENSGT00940000156682"/>
<dbReference type="InParanoid" id="P08069"/>
<dbReference type="OMA" id="FRGYAFK"/>
<dbReference type="OrthoDB" id="5809444at2759"/>
<dbReference type="PAN-GO" id="P08069">
    <property type="GO annotations" value="13 GO annotations based on evolutionary models"/>
</dbReference>
<dbReference type="PhylomeDB" id="P08069"/>
<dbReference type="TreeFam" id="TF351636"/>
<dbReference type="BRENDA" id="2.7.10.1">
    <property type="organism ID" value="2681"/>
</dbReference>
<dbReference type="PathwayCommons" id="P08069"/>
<dbReference type="Reactome" id="R-HSA-2404192">
    <property type="pathway name" value="Signaling by Type 1 Insulin-like Growth Factor 1 Receptor (IGF1R)"/>
</dbReference>
<dbReference type="Reactome" id="R-HSA-2428928">
    <property type="pathway name" value="IRS-related events triggered by IGF1R"/>
</dbReference>
<dbReference type="Reactome" id="R-HSA-2428933">
    <property type="pathway name" value="SHC-related events triggered by IGF1R"/>
</dbReference>
<dbReference type="Reactome" id="R-HSA-9009391">
    <property type="pathway name" value="Extra-nuclear estrogen signaling"/>
</dbReference>
<dbReference type="Reactome" id="R-HSA-9820960">
    <property type="pathway name" value="Respiratory syncytial virus (RSV) attachment and entry"/>
</dbReference>
<dbReference type="SignaLink" id="P08069"/>
<dbReference type="SIGNOR" id="P08069"/>
<dbReference type="BioGRID-ORCS" id="3480">
    <property type="hits" value="212 hits in 1220 CRISPR screens"/>
</dbReference>
<dbReference type="ChiTaRS" id="IGF1R">
    <property type="organism name" value="human"/>
</dbReference>
<dbReference type="EvolutionaryTrace" id="P08069"/>
<dbReference type="GeneWiki" id="Insulin-like_growth_factor_1_receptor"/>
<dbReference type="GenomeRNAi" id="3480"/>
<dbReference type="Pharos" id="P08069">
    <property type="development level" value="Tclin"/>
</dbReference>
<dbReference type="PRO" id="PR:P08069"/>
<dbReference type="Proteomes" id="UP000005640">
    <property type="component" value="Chromosome 15"/>
</dbReference>
<dbReference type="RNAct" id="P08069">
    <property type="molecule type" value="protein"/>
</dbReference>
<dbReference type="Bgee" id="ENSG00000140443">
    <property type="expression patterns" value="Expressed in caput epididymis and 208 other cell types or tissues"/>
</dbReference>
<dbReference type="ExpressionAtlas" id="P08069">
    <property type="expression patterns" value="baseline and differential"/>
</dbReference>
<dbReference type="GO" id="GO:0035867">
    <property type="term" value="C:alphav-beta3 integrin-IGF-1-IGF1R complex"/>
    <property type="evidence" value="ECO:0000314"/>
    <property type="project" value="UniProtKB"/>
</dbReference>
<dbReference type="GO" id="GO:0030424">
    <property type="term" value="C:axon"/>
    <property type="evidence" value="ECO:0000318"/>
    <property type="project" value="GO_Central"/>
</dbReference>
<dbReference type="GO" id="GO:0005929">
    <property type="term" value="C:cilium"/>
    <property type="evidence" value="ECO:0000314"/>
    <property type="project" value="HPA"/>
</dbReference>
<dbReference type="GO" id="GO:0005899">
    <property type="term" value="C:insulin receptor complex"/>
    <property type="evidence" value="ECO:0000318"/>
    <property type="project" value="GO_Central"/>
</dbReference>
<dbReference type="GO" id="GO:0043231">
    <property type="term" value="C:intracellular membrane-bounded organelle"/>
    <property type="evidence" value="ECO:0000314"/>
    <property type="project" value="BHF-UCL"/>
</dbReference>
<dbReference type="GO" id="GO:0016020">
    <property type="term" value="C:membrane"/>
    <property type="evidence" value="ECO:0000314"/>
    <property type="project" value="BHF-UCL"/>
</dbReference>
<dbReference type="GO" id="GO:0005730">
    <property type="term" value="C:nucleolus"/>
    <property type="evidence" value="ECO:0000314"/>
    <property type="project" value="HPA"/>
</dbReference>
<dbReference type="GO" id="GO:0005886">
    <property type="term" value="C:plasma membrane"/>
    <property type="evidence" value="ECO:0000314"/>
    <property type="project" value="HPA"/>
</dbReference>
<dbReference type="GO" id="GO:1902911">
    <property type="term" value="C:protein kinase complex"/>
    <property type="evidence" value="ECO:0000314"/>
    <property type="project" value="UniProtKB"/>
</dbReference>
<dbReference type="GO" id="GO:0043235">
    <property type="term" value="C:receptor complex"/>
    <property type="evidence" value="ECO:0000314"/>
    <property type="project" value="MGI"/>
</dbReference>
<dbReference type="GO" id="GO:0005524">
    <property type="term" value="F:ATP binding"/>
    <property type="evidence" value="ECO:0007669"/>
    <property type="project" value="UniProtKB-KW"/>
</dbReference>
<dbReference type="GO" id="GO:0042802">
    <property type="term" value="F:identical protein binding"/>
    <property type="evidence" value="ECO:0000353"/>
    <property type="project" value="IntAct"/>
</dbReference>
<dbReference type="GO" id="GO:0043559">
    <property type="term" value="F:insulin binding"/>
    <property type="evidence" value="ECO:0000353"/>
    <property type="project" value="BHF-UCL"/>
</dbReference>
<dbReference type="GO" id="GO:0005009">
    <property type="term" value="F:insulin receptor activity"/>
    <property type="evidence" value="ECO:0000318"/>
    <property type="project" value="GO_Central"/>
</dbReference>
<dbReference type="GO" id="GO:0005158">
    <property type="term" value="F:insulin receptor binding"/>
    <property type="evidence" value="ECO:0000314"/>
    <property type="project" value="BHF-UCL"/>
</dbReference>
<dbReference type="GO" id="GO:0043560">
    <property type="term" value="F:insulin receptor substrate binding"/>
    <property type="evidence" value="ECO:0000353"/>
    <property type="project" value="UniProtKB"/>
</dbReference>
<dbReference type="GO" id="GO:0005520">
    <property type="term" value="F:insulin-like growth factor binding"/>
    <property type="evidence" value="ECO:0000314"/>
    <property type="project" value="UniProtKB"/>
</dbReference>
<dbReference type="GO" id="GO:0031994">
    <property type="term" value="F:insulin-like growth factor I binding"/>
    <property type="evidence" value="ECO:0000314"/>
    <property type="project" value="UniProtKB"/>
</dbReference>
<dbReference type="GO" id="GO:0005010">
    <property type="term" value="F:insulin-like growth factor receptor activity"/>
    <property type="evidence" value="ECO:0000314"/>
    <property type="project" value="UniProtKB"/>
</dbReference>
<dbReference type="GO" id="GO:0043548">
    <property type="term" value="F:phosphatidylinositol 3-kinase binding"/>
    <property type="evidence" value="ECO:0000353"/>
    <property type="project" value="UniProtKB"/>
</dbReference>
<dbReference type="GO" id="GO:0140318">
    <property type="term" value="F:protein transporter activity"/>
    <property type="evidence" value="ECO:0000315"/>
    <property type="project" value="ARUK-UCL"/>
</dbReference>
<dbReference type="GO" id="GO:0004713">
    <property type="term" value="F:protein tyrosine kinase activity"/>
    <property type="evidence" value="ECO:0000314"/>
    <property type="project" value="UniProtKB"/>
</dbReference>
<dbReference type="GO" id="GO:0097242">
    <property type="term" value="P:amyloid-beta clearance"/>
    <property type="evidence" value="ECO:0000315"/>
    <property type="project" value="ARUK-UCL"/>
</dbReference>
<dbReference type="GO" id="GO:1904646">
    <property type="term" value="P:cellular response to amyloid-beta"/>
    <property type="evidence" value="ECO:0000316"/>
    <property type="project" value="ARUK-UCL"/>
</dbReference>
<dbReference type="GO" id="GO:0071333">
    <property type="term" value="P:cellular response to glucose stimulus"/>
    <property type="evidence" value="ECO:0000318"/>
    <property type="project" value="GO_Central"/>
</dbReference>
<dbReference type="GO" id="GO:0097062">
    <property type="term" value="P:dendritic spine maintenance"/>
    <property type="evidence" value="ECO:0000250"/>
    <property type="project" value="ARUK-UCL"/>
</dbReference>
<dbReference type="GO" id="GO:0006955">
    <property type="term" value="P:immune response"/>
    <property type="evidence" value="ECO:0000315"/>
    <property type="project" value="BHF-UCL"/>
</dbReference>
<dbReference type="GO" id="GO:0008286">
    <property type="term" value="P:insulin receptor signaling pathway"/>
    <property type="evidence" value="ECO:0000250"/>
    <property type="project" value="ARUK-UCL"/>
</dbReference>
<dbReference type="GO" id="GO:0048009">
    <property type="term" value="P:insulin-like growth factor receptor signaling pathway"/>
    <property type="evidence" value="ECO:0000314"/>
    <property type="project" value="UniProtKB"/>
</dbReference>
<dbReference type="GO" id="GO:0043066">
    <property type="term" value="P:negative regulation of apoptotic process"/>
    <property type="evidence" value="ECO:0000314"/>
    <property type="project" value="UniProtKB"/>
</dbReference>
<dbReference type="GO" id="GO:0043409">
    <property type="term" value="P:negative regulation of MAPK cascade"/>
    <property type="evidence" value="ECO:0000314"/>
    <property type="project" value="GO_Central"/>
</dbReference>
<dbReference type="GO" id="GO:0038083">
    <property type="term" value="P:peptidyl-tyrosine autophosphorylation"/>
    <property type="evidence" value="ECO:0000315"/>
    <property type="project" value="MGI"/>
</dbReference>
<dbReference type="GO" id="GO:0043491">
    <property type="term" value="P:phosphatidylinositol 3-kinase/protein kinase B signal transduction"/>
    <property type="evidence" value="ECO:0000305"/>
    <property type="project" value="BHF-UCL"/>
</dbReference>
<dbReference type="GO" id="GO:0030335">
    <property type="term" value="P:positive regulation of cell migration"/>
    <property type="evidence" value="ECO:0000315"/>
    <property type="project" value="BHF-UCL"/>
</dbReference>
<dbReference type="GO" id="GO:0008284">
    <property type="term" value="P:positive regulation of cell population proliferation"/>
    <property type="evidence" value="ECO:0000315"/>
    <property type="project" value="BHF-UCL"/>
</dbReference>
<dbReference type="GO" id="GO:0120162">
    <property type="term" value="P:positive regulation of cold-induced thermogenesis"/>
    <property type="evidence" value="ECO:0000250"/>
    <property type="project" value="YuBioLab"/>
</dbReference>
<dbReference type="GO" id="GO:0043410">
    <property type="term" value="P:positive regulation of MAPK cascade"/>
    <property type="evidence" value="ECO:0000318"/>
    <property type="project" value="GO_Central"/>
</dbReference>
<dbReference type="GO" id="GO:0051897">
    <property type="term" value="P:positive regulation of phosphatidylinositol 3-kinase/protein kinase B signal transduction"/>
    <property type="evidence" value="ECO:0000314"/>
    <property type="project" value="BHF-UCL"/>
</dbReference>
<dbReference type="GO" id="GO:0043243">
    <property type="term" value="P:positive regulation of protein-containing complex disassembly"/>
    <property type="evidence" value="ECO:0000250"/>
    <property type="project" value="ARUK-UCL"/>
</dbReference>
<dbReference type="GO" id="GO:0046777">
    <property type="term" value="P:protein autophosphorylation"/>
    <property type="evidence" value="ECO:0000314"/>
    <property type="project" value="UniProtKB"/>
</dbReference>
<dbReference type="GO" id="GO:0046328">
    <property type="term" value="P:regulation of JNK cascade"/>
    <property type="evidence" value="ECO:0000314"/>
    <property type="project" value="UniProtKB"/>
</dbReference>
<dbReference type="GO" id="GO:0007165">
    <property type="term" value="P:signal transduction"/>
    <property type="evidence" value="ECO:0000304"/>
    <property type="project" value="ProtInc"/>
</dbReference>
<dbReference type="GO" id="GO:0045056">
    <property type="term" value="P:transcytosis"/>
    <property type="evidence" value="ECO:0000315"/>
    <property type="project" value="ARUK-UCL"/>
</dbReference>
<dbReference type="CDD" id="cd00063">
    <property type="entry name" value="FN3"/>
    <property type="match status" value="3"/>
</dbReference>
<dbReference type="CDD" id="cd00064">
    <property type="entry name" value="FU"/>
    <property type="match status" value="1"/>
</dbReference>
<dbReference type="CDD" id="cd05032">
    <property type="entry name" value="PTKc_InsR_like"/>
    <property type="match status" value="1"/>
</dbReference>
<dbReference type="FunFam" id="2.60.40.10:FF:002810">
    <property type="entry name" value="Insulin-like growth factor 1 receptor"/>
    <property type="match status" value="1"/>
</dbReference>
<dbReference type="FunFam" id="1.10.510.10:FF:000050">
    <property type="entry name" value="Tyrosine-protein kinase receptor"/>
    <property type="match status" value="1"/>
</dbReference>
<dbReference type="FunFam" id="2.10.220.10:FF:000007">
    <property type="entry name" value="Tyrosine-protein kinase receptor"/>
    <property type="match status" value="1"/>
</dbReference>
<dbReference type="FunFam" id="2.60.40.10:FF:000087">
    <property type="entry name" value="Tyrosine-protein kinase receptor"/>
    <property type="match status" value="1"/>
</dbReference>
<dbReference type="FunFam" id="2.60.40.10:FF:002452">
    <property type="entry name" value="Tyrosine-protein kinase receptor"/>
    <property type="match status" value="1"/>
</dbReference>
<dbReference type="FunFam" id="3.30.200.20:FF:000026">
    <property type="entry name" value="Tyrosine-protein kinase receptor"/>
    <property type="match status" value="1"/>
</dbReference>
<dbReference type="FunFam" id="3.80.20.20:FF:000001">
    <property type="entry name" value="Tyrosine-protein kinase receptor"/>
    <property type="match status" value="1"/>
</dbReference>
<dbReference type="FunFam" id="3.80.20.20:FF:000002">
    <property type="entry name" value="Tyrosine-protein kinase receptor"/>
    <property type="match status" value="1"/>
</dbReference>
<dbReference type="Gene3D" id="2.10.220.10">
    <property type="entry name" value="Hormone Receptor, Insulin-like Growth Factor Receptor 1, Chain A, domain 2"/>
    <property type="match status" value="1"/>
</dbReference>
<dbReference type="Gene3D" id="2.60.40.10">
    <property type="entry name" value="Immunoglobulins"/>
    <property type="match status" value="3"/>
</dbReference>
<dbReference type="Gene3D" id="3.30.200.20">
    <property type="entry name" value="Phosphorylase Kinase, domain 1"/>
    <property type="match status" value="1"/>
</dbReference>
<dbReference type="Gene3D" id="3.80.20.20">
    <property type="entry name" value="Receptor L-domain"/>
    <property type="match status" value="2"/>
</dbReference>
<dbReference type="Gene3D" id="1.10.510.10">
    <property type="entry name" value="Transferase(Phosphotransferase) domain 1"/>
    <property type="match status" value="1"/>
</dbReference>
<dbReference type="InterPro" id="IPR003961">
    <property type="entry name" value="FN3_dom"/>
</dbReference>
<dbReference type="InterPro" id="IPR036116">
    <property type="entry name" value="FN3_sf"/>
</dbReference>
<dbReference type="InterPro" id="IPR006211">
    <property type="entry name" value="Furin-like_Cys-rich_dom"/>
</dbReference>
<dbReference type="InterPro" id="IPR006212">
    <property type="entry name" value="Furin_repeat"/>
</dbReference>
<dbReference type="InterPro" id="IPR009030">
    <property type="entry name" value="Growth_fac_rcpt_cys_sf"/>
</dbReference>
<dbReference type="InterPro" id="IPR013783">
    <property type="entry name" value="Ig-like_fold"/>
</dbReference>
<dbReference type="InterPro" id="IPR011009">
    <property type="entry name" value="Kinase-like_dom_sf"/>
</dbReference>
<dbReference type="InterPro" id="IPR000719">
    <property type="entry name" value="Prot_kinase_dom"/>
</dbReference>
<dbReference type="InterPro" id="IPR017441">
    <property type="entry name" value="Protein_kinase_ATP_BS"/>
</dbReference>
<dbReference type="InterPro" id="IPR000494">
    <property type="entry name" value="Rcpt_L-dom"/>
</dbReference>
<dbReference type="InterPro" id="IPR036941">
    <property type="entry name" value="Rcpt_L-dom_sf"/>
</dbReference>
<dbReference type="InterPro" id="IPR050122">
    <property type="entry name" value="RTK"/>
</dbReference>
<dbReference type="InterPro" id="IPR001245">
    <property type="entry name" value="Ser-Thr/Tyr_kinase_cat_dom"/>
</dbReference>
<dbReference type="InterPro" id="IPR008266">
    <property type="entry name" value="Tyr_kinase_AS"/>
</dbReference>
<dbReference type="InterPro" id="IPR020635">
    <property type="entry name" value="Tyr_kinase_cat_dom"/>
</dbReference>
<dbReference type="InterPro" id="IPR016246">
    <property type="entry name" value="Tyr_kinase_insulin-like_rcpt"/>
</dbReference>
<dbReference type="InterPro" id="IPR002011">
    <property type="entry name" value="Tyr_kinase_rcpt_2_CS"/>
</dbReference>
<dbReference type="PANTHER" id="PTHR24416:SF106">
    <property type="entry name" value="INSULIN-LIKE GROWTH FACTOR 1 RECEPTOR"/>
    <property type="match status" value="1"/>
</dbReference>
<dbReference type="PANTHER" id="PTHR24416">
    <property type="entry name" value="TYROSINE-PROTEIN KINASE RECEPTOR"/>
    <property type="match status" value="1"/>
</dbReference>
<dbReference type="Pfam" id="PF00757">
    <property type="entry name" value="Furin-like"/>
    <property type="match status" value="1"/>
</dbReference>
<dbReference type="Pfam" id="PF07714">
    <property type="entry name" value="PK_Tyr_Ser-Thr"/>
    <property type="match status" value="1"/>
</dbReference>
<dbReference type="Pfam" id="PF01030">
    <property type="entry name" value="Recep_L_domain"/>
    <property type="match status" value="2"/>
</dbReference>
<dbReference type="PIRSF" id="PIRSF000620">
    <property type="entry name" value="Insulin_receptor"/>
    <property type="match status" value="1"/>
</dbReference>
<dbReference type="PRINTS" id="PR00109">
    <property type="entry name" value="TYRKINASE"/>
</dbReference>
<dbReference type="SMART" id="SM00060">
    <property type="entry name" value="FN3"/>
    <property type="match status" value="3"/>
</dbReference>
<dbReference type="SMART" id="SM00261">
    <property type="entry name" value="FU"/>
    <property type="match status" value="1"/>
</dbReference>
<dbReference type="SMART" id="SM00219">
    <property type="entry name" value="TyrKc"/>
    <property type="match status" value="1"/>
</dbReference>
<dbReference type="SUPFAM" id="SSF49265">
    <property type="entry name" value="Fibronectin type III"/>
    <property type="match status" value="3"/>
</dbReference>
<dbReference type="SUPFAM" id="SSF57184">
    <property type="entry name" value="Growth factor receptor domain"/>
    <property type="match status" value="1"/>
</dbReference>
<dbReference type="SUPFAM" id="SSF52058">
    <property type="entry name" value="L domain-like"/>
    <property type="match status" value="2"/>
</dbReference>
<dbReference type="SUPFAM" id="SSF56112">
    <property type="entry name" value="Protein kinase-like (PK-like)"/>
    <property type="match status" value="1"/>
</dbReference>
<dbReference type="PROSITE" id="PS50853">
    <property type="entry name" value="FN3"/>
    <property type="match status" value="4"/>
</dbReference>
<dbReference type="PROSITE" id="PS00107">
    <property type="entry name" value="PROTEIN_KINASE_ATP"/>
    <property type="match status" value="1"/>
</dbReference>
<dbReference type="PROSITE" id="PS50011">
    <property type="entry name" value="PROTEIN_KINASE_DOM"/>
    <property type="match status" value="1"/>
</dbReference>
<dbReference type="PROSITE" id="PS00109">
    <property type="entry name" value="PROTEIN_KINASE_TYR"/>
    <property type="match status" value="1"/>
</dbReference>
<dbReference type="PROSITE" id="PS00239">
    <property type="entry name" value="RECEPTOR_TYR_KIN_II"/>
    <property type="match status" value="1"/>
</dbReference>
<evidence type="ECO:0000250" key="1">
    <source>
        <dbReference type="UniProtKB" id="Q60751"/>
    </source>
</evidence>
<evidence type="ECO:0000255" key="2"/>
<evidence type="ECO:0000255" key="3">
    <source>
        <dbReference type="PROSITE-ProRule" id="PRU00159"/>
    </source>
</evidence>
<evidence type="ECO:0000255" key="4">
    <source>
        <dbReference type="PROSITE-ProRule" id="PRU00316"/>
    </source>
</evidence>
<evidence type="ECO:0000255" key="5">
    <source>
        <dbReference type="PROSITE-ProRule" id="PRU10028"/>
    </source>
</evidence>
<evidence type="ECO:0000256" key="6">
    <source>
        <dbReference type="SAM" id="MobiDB-lite"/>
    </source>
</evidence>
<evidence type="ECO:0000269" key="7">
    <source>
    </source>
</evidence>
<evidence type="ECO:0000269" key="8">
    <source>
    </source>
</evidence>
<evidence type="ECO:0000269" key="9">
    <source>
    </source>
</evidence>
<evidence type="ECO:0000269" key="10">
    <source>
    </source>
</evidence>
<evidence type="ECO:0000269" key="11">
    <source>
    </source>
</evidence>
<evidence type="ECO:0000269" key="12">
    <source>
    </source>
</evidence>
<evidence type="ECO:0000269" key="13">
    <source>
    </source>
</evidence>
<evidence type="ECO:0000269" key="14">
    <source>
    </source>
</evidence>
<evidence type="ECO:0000269" key="15">
    <source>
    </source>
</evidence>
<evidence type="ECO:0000269" key="16">
    <source>
    </source>
</evidence>
<evidence type="ECO:0000269" key="17">
    <source>
    </source>
</evidence>
<evidence type="ECO:0000269" key="18">
    <source>
    </source>
</evidence>
<evidence type="ECO:0000269" key="19">
    <source>
    </source>
</evidence>
<evidence type="ECO:0000269" key="20">
    <source>
    </source>
</evidence>
<evidence type="ECO:0000269" key="21">
    <source>
    </source>
</evidence>
<evidence type="ECO:0000269" key="22">
    <source>
    </source>
</evidence>
<evidence type="ECO:0000269" key="23">
    <source>
    </source>
</evidence>
<evidence type="ECO:0000269" key="24">
    <source>
    </source>
</evidence>
<evidence type="ECO:0000269" key="25">
    <source>
    </source>
</evidence>
<evidence type="ECO:0000269" key="26">
    <source>
    </source>
</evidence>
<evidence type="ECO:0000269" key="27">
    <source>
    </source>
</evidence>
<evidence type="ECO:0000269" key="28">
    <source>
    </source>
</evidence>
<evidence type="ECO:0000269" key="29">
    <source>
    </source>
</evidence>
<evidence type="ECO:0000269" key="30">
    <source>
    </source>
</evidence>
<evidence type="ECO:0000269" key="31">
    <source>
    </source>
</evidence>
<evidence type="ECO:0000269" key="32">
    <source>
    </source>
</evidence>
<evidence type="ECO:0000269" key="33">
    <source>
    </source>
</evidence>
<evidence type="ECO:0000269" key="34">
    <source>
    </source>
</evidence>
<evidence type="ECO:0000269" key="35">
    <source>
    </source>
</evidence>
<evidence type="ECO:0000269" key="36">
    <source>
    </source>
</evidence>
<evidence type="ECO:0000269" key="37">
    <source>
    </source>
</evidence>
<evidence type="ECO:0000269" key="38">
    <source>
    </source>
</evidence>
<evidence type="ECO:0000269" key="39">
    <source>
    </source>
</evidence>
<evidence type="ECO:0000269" key="40">
    <source>
    </source>
</evidence>
<evidence type="ECO:0000269" key="41">
    <source>
    </source>
</evidence>
<evidence type="ECO:0000269" key="42">
    <source>
    </source>
</evidence>
<evidence type="ECO:0000269" key="43">
    <source>
    </source>
</evidence>
<evidence type="ECO:0000269" key="44">
    <source>
    </source>
</evidence>
<evidence type="ECO:0000269" key="45">
    <source>
    </source>
</evidence>
<evidence type="ECO:0000269" key="46">
    <source>
    </source>
</evidence>
<evidence type="ECO:0000269" key="47">
    <source>
    </source>
</evidence>
<evidence type="ECO:0000269" key="48">
    <source>
    </source>
</evidence>
<evidence type="ECO:0000269" key="49">
    <source>
    </source>
</evidence>
<evidence type="ECO:0000269" key="50">
    <source>
    </source>
</evidence>
<evidence type="ECO:0000269" key="51">
    <source ref="4"/>
</evidence>
<evidence type="ECO:0000269" key="52">
    <source ref="55"/>
</evidence>
<evidence type="ECO:0000305" key="53"/>
<evidence type="ECO:0000305" key="54">
    <source>
    </source>
</evidence>
<evidence type="ECO:0007829" key="55">
    <source>
        <dbReference type="PDB" id="1IGR"/>
    </source>
</evidence>
<evidence type="ECO:0007829" key="56">
    <source>
        <dbReference type="PDB" id="1P4O"/>
    </source>
</evidence>
<evidence type="ECO:0007829" key="57">
    <source>
        <dbReference type="PDB" id="2OJ9"/>
    </source>
</evidence>
<evidence type="ECO:0007829" key="58">
    <source>
        <dbReference type="PDB" id="2ZM3"/>
    </source>
</evidence>
<evidence type="ECO:0007829" key="59">
    <source>
        <dbReference type="PDB" id="3D94"/>
    </source>
</evidence>
<evidence type="ECO:0007829" key="60">
    <source>
        <dbReference type="PDB" id="3F5P"/>
    </source>
</evidence>
<evidence type="ECO:0007829" key="61">
    <source>
        <dbReference type="PDB" id="3LVP"/>
    </source>
</evidence>
<evidence type="ECO:0007829" key="62">
    <source>
        <dbReference type="PDB" id="3O23"/>
    </source>
</evidence>
<evidence type="ECO:0007829" key="63">
    <source>
        <dbReference type="PDB" id="4XSS"/>
    </source>
</evidence>
<evidence type="ECO:0007829" key="64">
    <source>
        <dbReference type="PDB" id="5U8Q"/>
    </source>
</evidence>
<evidence type="ECO:0007829" key="65">
    <source>
        <dbReference type="PDB" id="5U8R"/>
    </source>
</evidence>
<evidence type="ECO:0007829" key="66">
    <source>
        <dbReference type="PDB" id="6VWG"/>
    </source>
</evidence>
<evidence type="ECO:0007829" key="67">
    <source>
        <dbReference type="PDB" id="7PH8"/>
    </source>
</evidence>
<evidence type="ECO:0007829" key="68">
    <source>
        <dbReference type="PDB" id="8TAN"/>
    </source>
</evidence>
<gene>
    <name type="primary">IGF1R</name>
</gene>
<comment type="function">
    <text>Receptor tyrosine kinase which mediates actions of insulin-like growth factor 1 (IGF1). Binds IGF1 with high affinity and IGF2 and insulin (INS) with a lower affinity. The activated IGF1R is involved in cell growth and survival control. IGF1R is crucial for tumor transformation and survival of malignant cell. Ligand binding activates the receptor kinase, leading to receptor autophosphorylation, and tyrosines phosphorylation of multiple substrates, that function as signaling adapter proteins including, the insulin-receptor substrates (IRS1/2), Shc and 14-3-3 proteins. Phosphorylation of IRSs proteins lead to the activation of two main signaling pathways: the PI3K-AKT/PKB pathway and the Ras-MAPK pathway. The result of activating the MAPK pathway is increased cellular proliferation, whereas activating the PI3K pathway inhibits apoptosis and stimulates protein synthesis. Phosphorylated IRS1 can activate the 85 kDa regulatory subunit of PI3K (PIK3R1), leading to activation of several downstream substrates, including protein AKT/PKB. AKT phosphorylation, in turn, enhances protein synthesis through mTOR activation and triggers the antiapoptotic effects of IGFIR through phosphorylation and inactivation of BAD. In parallel to PI3K-driven signaling, recruitment of Grb2/SOS by phosphorylated IRS1 or Shc leads to recruitment of Ras and activation of the ras-MAPK pathway. In addition to these two main signaling pathways IGF1R signals also through the Janus kinase/signal transducer and activator of transcription pathway (JAK/STAT). Phosphorylation of JAK proteins can lead to phosphorylation/activation of signal transducers and activators of transcription (STAT) proteins. In particular activation of STAT3, may be essential for the transforming activity of IGF1R. The JAK/STAT pathway activates gene transcription and may be responsible for the transforming activity. JNK kinases can also be activated by the IGF1R. IGF1 exerts inhibiting activities on JNK activation via phosphorylation and inhibition of MAP3K5/ASK1, which is able to directly associate with the IGF1R.</text>
</comment>
<comment type="function">
    <text>When present in a hybrid receptor with INSR, binds IGF1. PubMed:12138094 shows that hybrid receptors composed of IGF1R and INSR isoform Long are activated with a high affinity by IGF1, with low affinity by IGF2 and not significantly activated by insulin, and that hybrid receptors composed of IGF1R and INSR isoform Short are activated by IGF1, IGF2 and insulin. In contrast, PubMed:16831875 shows that hybrid receptors composed of IGF1R and INSR isoform Long and hybrid receptors composed of IGF1R and INSR isoform Short have similar binding characteristics, both bind IGF1 and have a low affinity for insulin.</text>
</comment>
<comment type="catalytic activity">
    <reaction evidence="5 10 20 25 26 28 31 32 33 42 52">
        <text>L-tyrosyl-[protein] + ATP = O-phospho-L-tyrosyl-[protein] + ADP + H(+)</text>
        <dbReference type="Rhea" id="RHEA:10596"/>
        <dbReference type="Rhea" id="RHEA-COMP:10136"/>
        <dbReference type="Rhea" id="RHEA-COMP:20101"/>
        <dbReference type="ChEBI" id="CHEBI:15378"/>
        <dbReference type="ChEBI" id="CHEBI:30616"/>
        <dbReference type="ChEBI" id="CHEBI:46858"/>
        <dbReference type="ChEBI" id="CHEBI:61978"/>
        <dbReference type="ChEBI" id="CHEBI:456216"/>
        <dbReference type="EC" id="2.7.10.1"/>
    </reaction>
</comment>
<comment type="activity regulation">
    <text evidence="10 16 20 25 26 28 29 31 32 33 52">Activated by autophosphorylation at Tyr-1165, Tyr-1161 and Tyr-1166 on the kinase activation loop; phosphorylation at all three tyrosine residues is required for optimal kinase activity. Inhibited by MSC1609119A-1, BMS-754807, PQIP, benzimidazole pyridinone, isoquinolinedione, bis-azaindole, 3-cyanoquinoline, 2,4-bis-arylamino-1,3-pyrimidine, pyrrolopyrimidine, pyrrole-5-carboxaldehyde, picropodophyllin (PPP), tyrphostin derivatives. While most inhibitors bind to the ATP binding pocket, MSC1609119A-1 functions as allosteric inhibitor and binds close to the DFG motif and the activation loop.</text>
</comment>
<comment type="subunit">
    <text evidence="7 8 9 10 11 13 14 17 19 20 23 25 26 27 28 29 32 33 35 38 41 47 49 50 52">Tetramer of 2 alpha and 2 beta chains linked by disulfide bonds. The alpha chains contribute to the formation of the ligand-binding domain, while the beta chain carries the kinase domain. Interacts with PIK3R1 and with the PTB/PID domains of IRS1 and SHC1 in vitro when autophosphorylated on tyrosine residues. Forms a hybrid receptor with INSR, the hybrid is a tetramer consisting of 1 alpha chain and 1 beta chain of INSR and 1 alpha chain and 1 beta chain of IGF1R. Interacts with ARRB1 and ARRB2. Interacts with GRB10. Interacts with RACK1. Interacts with SOCS1, SOCS2 and SOCS3. Interacts with 14-3-3 proteins. Interacts with NMD2. Interacts with MAP3K5. Interacts with STAT3. Found in a ternary complex with IGF1 and ITGAV:ITGB3 or ITGA6:ITGB4 (PubMed:19578119, PubMed:22351760). Interacts (nascent precursor form) with ZFAND2B (PubMed:26692333).</text>
</comment>
<comment type="subunit">
    <text evidence="40">(Microbial infection) Interacts with human respiratory syncytial virus (HRSV) fusion glycoprotein F1/F2 heterodimer.</text>
</comment>
<comment type="interaction">
    <interactant intactId="EBI-475981">
        <id>P08069</id>
    </interactant>
    <interactant intactId="EBI-821440">
        <id>Q9NZN5</id>
        <label>ARHGEF12</label>
    </interactant>
    <organismsDiffer>false</organismsDiffer>
    <experiments>7</experiments>
</comment>
<comment type="interaction">
    <interactant intactId="EBI-475981">
        <id>P08069</id>
    </interactant>
    <interactant intactId="EBI-6378485">
        <id>PRO_0000004724</id>
        <label>CAMP</label>
        <dbReference type="UniProtKB" id="P49913"/>
    </interactant>
    <organismsDiffer>false</organismsDiffer>
    <experiments>3</experiments>
</comment>
<comment type="interaction">
    <interactant intactId="EBI-475981">
        <id>P08069</id>
    </interactant>
    <interactant intactId="EBI-1380630">
        <id>P41240</id>
        <label>CSK</label>
    </interactant>
    <organismsDiffer>false</organismsDiffer>
    <experiments>5</experiments>
</comment>
<comment type="interaction">
    <interactant intactId="EBI-475981">
        <id>P08069</id>
    </interactant>
    <interactant intactId="EBI-491549">
        <id>P35222</id>
        <label>CTNNB1</label>
    </interactant>
    <organismsDiffer>false</organismsDiffer>
    <experiments>3</experiments>
</comment>
<comment type="interaction">
    <interactant intactId="EBI-475981">
        <id>P08069</id>
    </interactant>
    <interactant intactId="EBI-7902275">
        <id>P05019</id>
        <label>IGF1</label>
    </interactant>
    <organismsDiffer>false</organismsDiffer>
    <experiments>8</experiments>
</comment>
<comment type="interaction">
    <interactant intactId="EBI-475981">
        <id>P08069</id>
    </interactant>
    <interactant intactId="EBI-475981">
        <id>P08069</id>
        <label>IGF1R</label>
    </interactant>
    <organismsDiffer>false</organismsDiffer>
    <experiments>6</experiments>
</comment>
<comment type="interaction">
    <interactant intactId="EBI-475981">
        <id>P08069</id>
    </interactant>
    <interactant intactId="EBI-475899">
        <id>P06213</id>
        <label>INSR</label>
    </interactant>
    <organismsDiffer>false</organismsDiffer>
    <experiments>5</experiments>
</comment>
<comment type="interaction">
    <interactant intactId="EBI-475981">
        <id>P08069</id>
    </interactant>
    <interactant intactId="EBI-703066">
        <id>P05556</id>
        <label>ITGB1</label>
    </interactant>
    <organismsDiffer>false</organismsDiffer>
    <experiments>2</experiments>
</comment>
<comment type="interaction">
    <interactant intactId="EBI-475981">
        <id>P08069</id>
    </interactant>
    <interactant intactId="EBI-751501">
        <id>Q9Y2W7</id>
        <label>KCNIP3</label>
    </interactant>
    <organismsDiffer>false</organismsDiffer>
    <experiments>6</experiments>
</comment>
<comment type="interaction">
    <interactant intactId="EBI-475981">
        <id>P08069</id>
    </interactant>
    <interactant intactId="EBI-926131">
        <id>Q9UJU2</id>
        <label>LEF1</label>
    </interactant>
    <organismsDiffer>false</organismsDiffer>
    <experiments>5</experiments>
</comment>
<comment type="interaction">
    <interactant intactId="EBI-475981">
        <id>P08069</id>
    </interactant>
    <interactant intactId="EBI-79464">
        <id>P27986</id>
        <label>PIK3R1</label>
    </interactant>
    <organismsDiffer>false</organismsDiffer>
    <experiments>6</experiments>
</comment>
<comment type="interaction">
    <interactant intactId="EBI-475981">
        <id>P08069</id>
    </interactant>
    <interactant intactId="EBI-346930">
        <id>O00459</id>
        <label>PIK3R2</label>
    </interactant>
    <organismsDiffer>false</organismsDiffer>
    <experiments>3</experiments>
</comment>
<comment type="interaction">
    <interactant intactId="EBI-475981">
        <id>P08069</id>
    </interactant>
    <interactant intactId="EBI-989143">
        <id>P35813</id>
        <label>PPM1A</label>
    </interactant>
    <organismsDiffer>false</organismsDiffer>
    <experiments>2</experiments>
</comment>
<comment type="interaction">
    <interactant intactId="EBI-475981">
        <id>P08069</id>
    </interactant>
    <interactant intactId="EBI-968788">
        <id>P18031</id>
        <label>PTPN1</label>
    </interactant>
    <organismsDiffer>false</organismsDiffer>
    <experiments>4</experiments>
</comment>
<comment type="interaction">
    <interactant intactId="EBI-475981">
        <id>P08069</id>
    </interactant>
    <interactant intactId="EBI-297779">
        <id>Q06124</id>
        <label>PTPN11</label>
    </interactant>
    <organismsDiffer>false</organismsDiffer>
    <experiments>5</experiments>
</comment>
<comment type="interaction">
    <interactant intactId="EBI-475981">
        <id>P08069</id>
    </interactant>
    <interactant intactId="EBI-78260">
        <id>P29350</id>
        <label>PTPN6</label>
    </interactant>
    <organismsDiffer>false</organismsDiffer>
    <experiments>3</experiments>
</comment>
<comment type="interaction">
    <interactant intactId="EBI-475981">
        <id>P08069</id>
    </interactant>
    <interactant intactId="EBI-1000553">
        <id>P29353-2</id>
        <label>SHC1</label>
    </interactant>
    <organismsDiffer>false</organismsDiffer>
    <experiments>2</experiments>
</comment>
<comment type="interaction">
    <interactant intactId="EBI-475981">
        <id>P08069</id>
    </interactant>
    <interactant intactId="EBI-1054248">
        <id>Q01995</id>
        <label>TAGLN</label>
    </interactant>
    <organismsDiffer>false</organismsDiffer>
    <experiments>2</experiments>
</comment>
<comment type="interaction">
    <interactant intactId="EBI-475981">
        <id>P08069</id>
    </interactant>
    <interactant intactId="EBI-356498">
        <id>P62258</id>
        <label>YWHAE</label>
    </interactant>
    <organismsDiffer>false</organismsDiffer>
    <experiments>2</experiments>
</comment>
<comment type="interaction">
    <interactant intactId="EBI-475981">
        <id>P08069</id>
    </interactant>
    <interactant intactId="EBI-2906540">
        <id>Q64010</id>
        <label>Crk</label>
    </interactant>
    <organismsDiffer>true</organismsDiffer>
    <experiments>3</experiments>
</comment>
<comment type="interaction">
    <interactant intactId="EBI-475981">
        <id>P08069</id>
    </interactant>
    <interactant intactId="EBI-3989070">
        <id>P01317</id>
        <label>INS</label>
    </interactant>
    <organismsDiffer>true</organismsDiffer>
    <experiments>4</experiments>
</comment>
<comment type="subcellular location">
    <subcellularLocation>
        <location evidence="22">Cell membrane</location>
        <topology evidence="22">Single-pass type I membrane protein</topology>
    </subcellularLocation>
</comment>
<comment type="tissue specificity">
    <text evidence="12 43 45 46">Found as a hybrid receptor with INSR in muscle, heart, kidney, adipose tissue, skeletal muscle, hepatoma, fibroblasts, spleen and placenta (at protein level). Expressed in a variety of tissues. Overexpressed in tumors, including melanomas, cancers of the colon, pancreas prostate and kidney.</text>
</comment>
<comment type="PTM">
    <text evidence="1 10 24 26 37 41">Autophosphorylated on tyrosine residues in response to ligand binding (PubMed:11694888, PubMed:18501599, PubMed:19041240). Autophosphorylation occurs in trans, i.e. one subunit of the dimeric receptor phosphorylates tyrosine residues on the other subunit (PubMed:11694888, PubMed:18501599, PubMed:19041240). Autophosphorylation occurs in a sequential manner; Tyr-1165 is predominantly phosphorylated first, followed by phosphorylation of Tyr-1161 and Tyr-1166 (PubMed:11694888, PubMed:18501599, PubMed:19041240). While every single phosphorylation increases kinase activity, all three tyrosine residues in the kinase activation loop (Tyr-1165, Tyr-1161 and Tyr-1166) have to be phosphorylated for optimal activity (PubMed:11694888, PubMed:18501599, PubMed:19041240). Can be autophosphorylated at additional tyrosine residues (in vitro) (PubMed:11694888, PubMed:18501599, PubMed:19041240). Autophosphorylated is followed by phosphorylation of juxtamembrane tyrosines and C-terminal serines (PubMed:11694888, PubMed:18501599, PubMed:19041240). May also be phosphorylated at Tyr-1161 and Tyr-1166 by mTORC2 (PubMed:26584640). Phosphorylation of Tyr-980 is required for IRS1- and SHC1-binding (PubMed:7541045). Phosphorylation of Ser-1278 by GSK-3beta restrains kinase activity and promotes cell surface expression, it requires a priming phosphorylation at Ser-1282 (By similarity). Dephosphorylated by PTPN1.</text>
</comment>
<comment type="PTM">
    <text evidence="10 14 24 26 34 41">Polyubiquitinated at Lys-1168 and Lys-1171 through both 'Lys-48' and 'Lys-29' linkages, promoting receptor endocytosis and subsequent degradation by the proteasome. Ubiquitination is facilitated by pre-existing phosphorylation.</text>
</comment>
<comment type="PTM">
    <text evidence="30">Sumoylated with SUMO1.</text>
</comment>
<comment type="PTM">
    <text evidence="22">Controlled by regulated intramembrane proteolysis (RIP). Undergoes metalloprotease-dependent constitutive ectodomain shedding to produce a membrane-anchored 52 kDa C-Terminal fragment which is further processed by presenilin gamma-secretase to yield an intracellular 50 kDa fragment.</text>
</comment>
<comment type="disease" evidence="15 18 36">
    <disease id="DI-02747">
        <name>Insulin-like growth factor 1 resistance</name>
        <acronym>IGF1RES</acronym>
        <description>A disorder characterized by intrauterine growth retardation, poor postnatal growth and increased plasma IGF1 levels.</description>
        <dbReference type="MIM" id="270450"/>
    </disease>
    <text>The disease is caused by variants affecting the gene represented in this entry.</text>
</comment>
<comment type="similarity">
    <text evidence="3">Belongs to the protein kinase superfamily. Tyr protein kinase family. Insulin receptor subfamily.</text>
</comment>
<comment type="sequence caution" evidence="53">
    <conflict type="erroneous initiation">
        <sequence resource="EMBL-CDS" id="BAG11657"/>
    </conflict>
    <text>Extended N-terminus.</text>
</comment>
<comment type="online information" name="Atlas of Genetics and Cytogenetics in Oncology and Haematology">
    <link uri="https://atlasgeneticsoncology.org/gene/40928/IGF1R"/>
</comment>
<comment type="online information" name="Wikipedia">
    <link uri="https://en.wikipedia.org/wiki/IGF-1_receptor"/>
    <text>IGF-1 receptor entry</text>
</comment>
<reference key="1">
    <citation type="journal article" date="1986" name="EMBO J.">
        <title>Insulin-like growth factor I receptor primary structure: comparison with insulin receptor suggests structural determinants that define functional specificity.</title>
        <authorList>
            <person name="Ullrich A."/>
            <person name="Gray A."/>
            <person name="Tam A.W."/>
            <person name="Yang-Feng T."/>
            <person name="Tsubokawa M."/>
            <person name="Collins C."/>
            <person name="Henzel W."/>
            <person name="Bon T.L."/>
            <person name="Kathuria S."/>
            <person name="Chen E."/>
            <person name="Jacobs S."/>
            <person name="Francke U."/>
            <person name="Ramachandran J."/>
            <person name="Fujita-Yamaguchi Y."/>
        </authorList>
    </citation>
    <scope>NUCLEOTIDE SEQUENCE [MRNA]</scope>
    <scope>PROTEIN SEQUENCE OF 31-56; 446-453; 503-524; 561-579; 668-672 AND 721-729</scope>
    <source>
        <tissue>Placenta</tissue>
    </source>
</reference>
<reference key="2">
    <citation type="journal article" date="1992" name="J. Biol. Chem.">
        <title>Insulin-like growth factor I receptor gene structure.</title>
        <authorList>
            <person name="Abbot A.M."/>
            <person name="Bueno R."/>
            <person name="Pedrini M.T."/>
            <person name="Murray J.M."/>
            <person name="Smith R.J."/>
        </authorList>
    </citation>
    <scope>NUCLEOTIDE SEQUENCE [GENOMIC DNA]</scope>
</reference>
<reference key="3">
    <citation type="submission" date="2008-02" db="EMBL/GenBank/DDBJ databases">
        <authorList>
            <person name="Nagase T."/>
            <person name="Kikuno R.F."/>
            <person name="Yamakawa H."/>
            <person name="Ohara O."/>
        </authorList>
    </citation>
    <scope>NUCLEOTIDE SEQUENCE [LARGE SCALE MRNA]</scope>
    <source>
        <tissue>Fetal brain</tissue>
    </source>
</reference>
<reference key="4">
    <citation type="submission" date="2003-06" db="EMBL/GenBank/DDBJ databases">
        <authorList>
            <consortium name="NIEHS SNPs program"/>
        </authorList>
    </citation>
    <scope>NUCLEOTIDE SEQUENCE [GENOMIC DNA]</scope>
    <scope>VARIANTS MET-388 AND HIS-605</scope>
</reference>
<reference key="5">
    <citation type="journal article" date="2006" name="Nature">
        <title>Analysis of the DNA sequence and duplication history of human chromosome 15.</title>
        <authorList>
            <person name="Zody M.C."/>
            <person name="Garber M."/>
            <person name="Sharpe T."/>
            <person name="Young S.K."/>
            <person name="Rowen L."/>
            <person name="O'Neill K."/>
            <person name="Whittaker C.A."/>
            <person name="Kamal M."/>
            <person name="Chang J.L."/>
            <person name="Cuomo C.A."/>
            <person name="Dewar K."/>
            <person name="FitzGerald M.G."/>
            <person name="Kodira C.D."/>
            <person name="Madan A."/>
            <person name="Qin S."/>
            <person name="Yang X."/>
            <person name="Abbasi N."/>
            <person name="Abouelleil A."/>
            <person name="Arachchi H.M."/>
            <person name="Baradarani L."/>
            <person name="Birditt B."/>
            <person name="Bloom S."/>
            <person name="Bloom T."/>
            <person name="Borowsky M.L."/>
            <person name="Burke J."/>
            <person name="Butler J."/>
            <person name="Cook A."/>
            <person name="DeArellano K."/>
            <person name="DeCaprio D."/>
            <person name="Dorris L. III"/>
            <person name="Dors M."/>
            <person name="Eichler E.E."/>
            <person name="Engels R."/>
            <person name="Fahey J."/>
            <person name="Fleetwood P."/>
            <person name="Friedman C."/>
            <person name="Gearin G."/>
            <person name="Hall J.L."/>
            <person name="Hensley G."/>
            <person name="Johnson E."/>
            <person name="Jones C."/>
            <person name="Kamat A."/>
            <person name="Kaur A."/>
            <person name="Locke D.P."/>
            <person name="Madan A."/>
            <person name="Munson G."/>
            <person name="Jaffe D.B."/>
            <person name="Lui A."/>
            <person name="Macdonald P."/>
            <person name="Mauceli E."/>
            <person name="Naylor J.W."/>
            <person name="Nesbitt R."/>
            <person name="Nicol R."/>
            <person name="O'Leary S.B."/>
            <person name="Ratcliffe A."/>
            <person name="Rounsley S."/>
            <person name="She X."/>
            <person name="Sneddon K.M.B."/>
            <person name="Stewart S."/>
            <person name="Sougnez C."/>
            <person name="Stone S.M."/>
            <person name="Topham K."/>
            <person name="Vincent D."/>
            <person name="Wang S."/>
            <person name="Zimmer A.R."/>
            <person name="Birren B.W."/>
            <person name="Hood L."/>
            <person name="Lander E.S."/>
            <person name="Nusbaum C."/>
        </authorList>
    </citation>
    <scope>NUCLEOTIDE SEQUENCE [LARGE SCALE GENOMIC DNA]</scope>
</reference>
<reference key="6">
    <citation type="journal article" date="2004" name="Genome Res.">
        <title>The status, quality, and expansion of the NIH full-length cDNA project: the Mammalian Gene Collection (MGC).</title>
        <authorList>
            <consortium name="The MGC Project Team"/>
        </authorList>
    </citation>
    <scope>NUCLEOTIDE SEQUENCE [LARGE SCALE MRNA]</scope>
</reference>
<reference key="7">
    <citation type="journal article" date="1991" name="Biochem. Biophys. Res. Commun.">
        <title>Analysis of the human type I insulin-like growth factor receptor promoter region.</title>
        <authorList>
            <person name="Cooke D.W."/>
            <person name="Bankert L.A."/>
            <person name="Roberts C.T. Jr."/>
            <person name="Leroith D."/>
            <person name="Casella S.J."/>
        </authorList>
    </citation>
    <scope>NUCLEOTIDE SEQUENCE [GENOMIC DNA] OF 1-31</scope>
</reference>
<reference key="8">
    <citation type="journal article" date="1993" name="Biochemistry">
        <title>Characterization of human placental insulin-like growth factor-I/insulin hybrid receptors by protein microsequencing and purification.</title>
        <authorList>
            <person name="Kasuya J."/>
            <person name="Paz I.B."/>
            <person name="Maddux B.A."/>
            <person name="Goldfine I.D."/>
            <person name="Hefta S.A."/>
            <person name="Fujita-Yamaguchi Y."/>
        </authorList>
    </citation>
    <scope>PROTEIN SEQUENCE OF 31-45 AND 741-750</scope>
    <scope>FUNCTION</scope>
    <scope>FORMATION OF A HYBRID RECEPTOR WITH INSR</scope>
    <source>
        <tissue>Placenta</tissue>
    </source>
</reference>
<reference key="9">
    <citation type="journal article" date="1993" name="Oncogene">
        <title>A survey of protein tyrosine kinase mRNAs expressed in normal human melanocytes.</title>
        <authorList>
            <person name="Lee S.-T."/>
            <person name="Strunk K.M."/>
            <person name="Spritz R.A."/>
        </authorList>
    </citation>
    <scope>NUCLEOTIDE SEQUENCE [MRNA] OF 1137-1193</scope>
    <scope>TISSUE SPECIFICITY</scope>
    <source>
        <tissue>Melanocyte</tissue>
    </source>
</reference>
<reference key="10">
    <citation type="journal article" date="1991" name="Biochemistry">
        <title>Interaction of the alpha beta dimers of the insulin-like growth factor I receptor is required for receptor autophosphorylation.</title>
        <authorList>
            <person name="Tollefsen S.E."/>
            <person name="Stoszek R.M."/>
            <person name="Thompson K."/>
        </authorList>
    </citation>
    <scope>FUNCTION</scope>
    <scope>SUBUNIT</scope>
    <scope>AUTOPHOSPHORYLATION</scope>
</reference>
<reference key="11">
    <citation type="journal article" date="1993" name="Biochem. J.">
        <title>Purified hybrid insulin/insulin-like growth factor-I receptors bind insulin-like growth factor-I, but not insulin, with high affinity.</title>
        <authorList>
            <person name="Soos M.A."/>
            <person name="Field C.E."/>
            <person name="Siddle K."/>
        </authorList>
    </citation>
    <scope>FUNCTION</scope>
    <scope>FORMATION OF A HYBRID RECEPTOR WITH INSR</scope>
</reference>
<reference key="12">
    <citation type="journal article" date="1993" name="J. Biol. Chem.">
        <title>Role of tyrosine kinase activity in signal transduction by the insulin-like growth factor-I (IGF-I) receptor. Characterization of kinase-deficient IGF-I receptors and the action of an IGF-I-mimetic antibody (alpha IR-3).</title>
        <authorList>
            <person name="Kato H."/>
            <person name="Faria T.N."/>
            <person name="Stannard B."/>
            <person name="Roberts C.T. Jr."/>
            <person name="LeRoith D."/>
        </authorList>
    </citation>
    <scope>FUNCTION</scope>
    <scope>CATALYTIC ACTIVITY</scope>
    <scope>AUTOPHOSPHORYLATION</scope>
</reference>
<reference key="13">
    <citation type="journal article" date="1995" name="J. Biol. Chem.">
        <title>Non-SH2 domains within insulin receptor substrate-1 and SHC mediate their phosphotyrosine-dependent interaction with the NPEY motif of the insulin-like growth factor I receptor.</title>
        <authorList>
            <person name="Craparo A."/>
            <person name="O'Neill T.J."/>
            <person name="Gustafson T.A."/>
        </authorList>
    </citation>
    <scope>INTERACTION WITH IRS1; SHC1 AND PIK3R1</scope>
    <scope>MUTAGENESIS OF TYR-980 AND LYS-1033</scope>
    <scope>PHOSPHORYLATION AT TYR-980</scope>
</reference>
<reference key="14">
    <citation type="journal article" date="1997" name="Biochem. J.">
        <title>Insulin receptor/IGF-I receptor hybrids are widely distributed in mammalian tissues: quantification of individual receptor species by selective immunoprecipitation and immunoblotting.</title>
        <authorList>
            <person name="Bailyes E.M."/>
            <person name="Nave B.T."/>
            <person name="Soos M.A."/>
            <person name="Orr S.R."/>
            <person name="Hayward A.C."/>
            <person name="Siddle K."/>
        </authorList>
    </citation>
    <scope>FORMATION OF A HYBRID RECEPTOR WITH INSR</scope>
    <scope>TISSUE SPECIFICITY</scope>
</reference>
<reference key="15">
    <citation type="journal article" date="1997" name="Biochem. J.">
        <title>14-3-3 proteins interact with the insulin-like growth factor receptor but not the insulin receptor.</title>
        <authorList>
            <person name="Furlanetto R.W."/>
            <person name="Dey B.R."/>
            <person name="Lopaczynski W."/>
            <person name="Nissley S.P."/>
        </authorList>
    </citation>
    <scope>INTERACTION WITH 14-3-3 PROTEINS</scope>
</reference>
<reference key="16">
    <citation type="journal article" date="1997" name="Mol. Cell. Endocrinol.">
        <title>Distribution of insulin/insulin-like growth factor-I hybrid receptors in human tissues.</title>
        <authorList>
            <person name="Federici M."/>
            <person name="Porzio O."/>
            <person name="Zucaro L."/>
            <person name="Fusco A."/>
            <person name="Borboni P."/>
            <person name="Lauro D."/>
            <person name="Sesti G."/>
        </authorList>
    </citation>
    <scope>FORMATION OF A HYBRID RECEPTOR WITH INSR</scope>
    <scope>TISSUE SPECIFICITY</scope>
</reference>
<reference key="17">
    <citation type="journal article" date="1998" name="J. Biol. Chem.">
        <title>Interaction of human suppressor of cytokine signaling (SOCS)-2 with the insulin-like growth factor-I receptor.</title>
        <authorList>
            <person name="Dey B.R."/>
            <person name="Spence S.L."/>
            <person name="Nissley P."/>
            <person name="Furlanetto R.W."/>
        </authorList>
    </citation>
    <scope>INTERACTION WITH SOCS1 AND SOCS2</scope>
</reference>
<reference key="18">
    <citation type="journal article" date="1998" name="J. Biol. Chem.">
        <title>beta-arrestins regulate mitogenic signaling and clathrin-mediated endocytosis of the insulin-like growth factor I receptor.</title>
        <authorList>
            <person name="Lin F.-T."/>
            <person name="Daaka Y."/>
            <person name="Lefkowitz R.J."/>
        </authorList>
    </citation>
    <scope>INTERACTION WITH ARRB1 AND ARRB2</scope>
</reference>
<reference key="19">
    <citation type="journal article" date="1999" name="Exp. Cell Res.">
        <title>The IGF-I receptor in cancer research.</title>
        <authorList>
            <person name="Baserga R."/>
        </authorList>
    </citation>
    <scope>FUNCTION IN CANCER</scope>
</reference>
<reference key="20">
    <citation type="journal article" date="1999" name="Mol. Cell. Biol.">
        <title>Grb10, a positive, stimulatory signaling adapter in platelet-derived growth factor BB-, insulin-like growth factor I-, and insulin-mediated mitogenesis.</title>
        <authorList>
            <person name="Wang J."/>
            <person name="Dai H."/>
            <person name="Yousaf N."/>
            <person name="Moussaif M."/>
            <person name="Deng Y."/>
            <person name="Boufelliga A."/>
            <person name="Swamy O.R."/>
            <person name="Leone M.E."/>
            <person name="Riedel H."/>
        </authorList>
    </citation>
    <scope>INTERACTION WITH GRB10</scope>
    <scope>MUTAGENESIS OF TYR-980; TYR-1280; TYR-1281 AND TYR-1346</scope>
</reference>
<reference key="21">
    <citation type="journal article" date="2000" name="Biochem. Biophys. Res. Commun.">
        <title>Suppressor of cytokine signaling (SOCS)-3 protein interacts with the insulin-like growth factor-I receptor.</title>
        <authorList>
            <person name="Dey B.R."/>
            <person name="Furlanetto R.W."/>
            <person name="Nissley P."/>
        </authorList>
    </citation>
    <scope>INTERACTION WITH SOCS3</scope>
</reference>
<reference key="22">
    <citation type="journal article" date="2000" name="Biochem. Biophys. Res. Commun.">
        <title>Autophosphorylation of the insulin-like growth factor I receptor cytoplasmic domain.</title>
        <authorList>
            <person name="Lopaczynski W."/>
            <person name="Terry C."/>
            <person name="Nissley P."/>
        </authorList>
    </citation>
    <scope>AUTOPHOSPHORYLATION</scope>
</reference>
<reference key="23">
    <citation type="journal article" date="2000" name="J. Biol. Chem.">
        <title>Mechanism of STAT3 activation by insulin-like growth factor I receptor.</title>
        <authorList>
            <person name="Zong C.S."/>
            <person name="Chan J."/>
            <person name="Levy D.E."/>
            <person name="Horvath C."/>
            <person name="Sadowski H.B."/>
            <person name="Wang L.H."/>
        </authorList>
    </citation>
    <scope>FUNCTION IN ACTIVATION OF STAT3</scope>
</reference>
<reference key="24">
    <citation type="journal article" date="2002" name="Cancer Res.">
        <title>Expression of the type 1 insulin-like growth factor receptor is up-regulated in primary prostate cancer and commonly persists in metastatic disease.</title>
        <authorList>
            <person name="Hellawell G.O."/>
            <person name="Turner G.D."/>
            <person name="Davies D.R."/>
            <person name="Poulsom R."/>
            <person name="Brewster S.F."/>
            <person name="Macaulay V.M."/>
        </authorList>
    </citation>
    <scope>TISSUE SPECIFICITY</scope>
</reference>
<reference key="25">
    <citation type="journal article" date="2002" name="J. Biol. Chem.">
        <title>Insulin/insulin-like growth factor I hybrid receptors have different biological characteristics depending on the insulin receptor isoform involved.</title>
        <authorList>
            <person name="Pandini G."/>
            <person name="Frasca F."/>
            <person name="Mineo R."/>
            <person name="Sciacca L."/>
            <person name="Vigneri R."/>
            <person name="Belfiore A."/>
        </authorList>
    </citation>
    <scope>FUNCTION</scope>
    <scope>FORMATION OF A HYBRID RECEPTOR WITH INSR</scope>
</reference>
<reference key="26">
    <citation type="journal article" date="2002" name="Mol. Cell. Biol.">
        <title>RACK1, an insulin-like growth factor I (IGF-I) receptor-interacting protein, modulates IGF-I-dependent integrin signaling and promotes cell spreading and contact with extracellular matrix.</title>
        <authorList>
            <person name="Hermanto U."/>
            <person name="Zong C.S."/>
            <person name="Li W."/>
            <person name="Wang L.H."/>
        </authorList>
    </citation>
    <scope>INTERACTION WITH RACK1</scope>
</reference>
<reference key="27">
    <citation type="journal article" date="2003" name="J. Biol. Chem.">
        <title>Type 1 insulin-like growth factor receptor (IGF-IR) signaling inhibits apoptosis signal-regulating kinase 1 (ASK1).</title>
        <authorList>
            <person name="Galvan V."/>
            <person name="Logvinova A."/>
            <person name="Sperandio S."/>
            <person name="Ichijo H."/>
            <person name="Bredesen D.E."/>
        </authorList>
    </citation>
    <scope>FUNCTION</scope>
    <scope>INTERACTION WITH MAP3K5</scope>
</reference>
<reference key="28">
    <citation type="journal article" date="2003" name="Proc. Natl. Acad. Sci. U.S.A.">
        <title>Mdm2-dependent ubiquitination and degradation of the insulin-like growth factor 1 receptor.</title>
        <authorList>
            <person name="Girnita L."/>
            <person name="Girnita A."/>
            <person name="Larsson O."/>
        </authorList>
    </citation>
    <scope>UBIQUITINATION BY MDM2</scope>
    <scope>INTERACTION WITH MDM2</scope>
</reference>
<reference key="29">
    <citation type="journal article" date="2004" name="Cancer Res.">
        <title>Cyclolignans as inhibitors of the insulin-like growth factor-1 receptor and malignant cell growth.</title>
        <authorList>
            <person name="Girnita A."/>
            <person name="Girnita L."/>
            <person name="del Prete F."/>
            <person name="Bartolazzi A."/>
            <person name="Larsson O."/>
            <person name="Axelson M."/>
        </authorList>
    </citation>
    <scope>ACTIVITY REGULATION</scope>
</reference>
<reference key="30">
    <citation type="journal article" date="2005" name="J. Biol. Chem.">
        <title>{beta}-Arrestin is crucial for ubiquitination and down-regulation of the insulin-like growth factor-1 receptor by acting as adaptor for the MDM2 E3 ligase.</title>
        <authorList>
            <person name="Girnita L."/>
            <person name="Shenoy S.K."/>
            <person name="Sehat B."/>
            <person name="Vasilcanu R."/>
            <person name="Girnita A."/>
            <person name="Lefkowitz R.J."/>
            <person name="Larsson O."/>
        </authorList>
    </citation>
    <scope>INTERACTION WITH ARRB1 AND ARRB2</scope>
</reference>
<reference key="31">
    <citation type="journal article" date="2005" name="J. Biol. Chem.">
        <title>JAK/STAT3 pathway is involved in survival of neurons in response to insulin-like growth factor and negatively regulated by suppressor of cytokine signaling-3.</title>
        <authorList>
            <person name="Yadav A."/>
            <person name="Kalita A."/>
            <person name="Dhillon S."/>
            <person name="Banerjee K."/>
        </authorList>
    </citation>
    <scope>INTERACTION WITH STAT3</scope>
</reference>
<reference key="32">
    <citation type="journal article" date="2006" name="J. Biol. Chem.">
        <title>Hybrid receptors formed by insulin receptor (IR) and insulin-like growth factor I receptor (IGF-IR) have low insulin and high IGF-1 affinity irrespective of the IR splice variant.</title>
        <authorList>
            <person name="Slaaby R."/>
            <person name="Schaeffer L."/>
            <person name="Lautrup-Larsen I."/>
            <person name="Andersen A.S."/>
            <person name="Shaw A.C."/>
            <person name="Mathiasen I.S."/>
            <person name="Brandt J."/>
        </authorList>
    </citation>
    <scope>FUNCTION</scope>
    <scope>FORMATION OF A HYBRID RECEPTOR WITH INSR</scope>
</reference>
<reference key="33">
    <citation type="journal article" date="2007" name="Biochem. Biophys. Res. Commun.">
        <title>The insulin-like growth factor 1 (IGF-1) receptor is a substrate for gamma-secretase-mediated intramembrane proteolysis.</title>
        <authorList>
            <person name="McElroy B."/>
            <person name="Powell J.C."/>
            <person name="McCarthy J.V."/>
        </authorList>
    </citation>
    <scope>SUBCELLULAR LOCATION</scope>
    <scope>PROTEOLYTIC PROCESSING</scope>
</reference>
<reference key="34">
    <citation type="journal article" date="2007" name="Eur. J. Cancer">
        <title>The insulin-like growth factor 1 receptor in cancer: old focus, new future.</title>
        <authorList>
            <person name="Hartog H."/>
            <person name="Wesseling J."/>
            <person name="Boezen H.M."/>
            <person name="van der Graaf W.T."/>
        </authorList>
    </citation>
    <scope>REVIEW ON IGF1R IN CANCER</scope>
</reference>
<reference key="35">
    <citation type="journal article" date="2008" name="Mol. Cell">
        <title>Kinase-selective enrichment enables quantitative phosphoproteomics of the kinome across the cell cycle.</title>
        <authorList>
            <person name="Daub H."/>
            <person name="Olsen J.V."/>
            <person name="Bairlein M."/>
            <person name="Gnad F."/>
            <person name="Oppermann F.S."/>
            <person name="Korner R."/>
            <person name="Greff Z."/>
            <person name="Keri G."/>
            <person name="Stemmann O."/>
            <person name="Mann M."/>
        </authorList>
    </citation>
    <scope>IDENTIFICATION BY MASS SPECTROMETRY [LARGE SCALE ANALYSIS]</scope>
    <source>
        <tissue>Cervix carcinoma</tissue>
    </source>
</reference>
<reference key="36">
    <citation type="journal article" date="2009" name="J. Biol. Chem.">
        <title>The direct binding of insulin-like growth factor-1 (IGF-1) to integrin alphavbeta3 is involved in IGF-1 signaling.</title>
        <authorList>
            <person name="Saegusa J."/>
            <person name="Yamaji S."/>
            <person name="Ieguchi K."/>
            <person name="Wu C.Y."/>
            <person name="Lam K.S."/>
            <person name="Liu F.T."/>
            <person name="Takada Y.K."/>
            <person name="Takada Y."/>
        </authorList>
    </citation>
    <scope>BINDING TO IGF1</scope>
    <scope>IDENTIFICATION IN A COMPLEX WITH INTEGRIN AND IGF1</scope>
</reference>
<reference key="37">
    <citation type="journal article" date="2009" name="Mol. Cell. Proteomics">
        <title>Large-scale proteomics analysis of the human kinome.</title>
        <authorList>
            <person name="Oppermann F.S."/>
            <person name="Gnad F."/>
            <person name="Olsen J.V."/>
            <person name="Hornberger R."/>
            <person name="Greff Z."/>
            <person name="Keri G."/>
            <person name="Mann M."/>
            <person name="Daub H."/>
        </authorList>
    </citation>
    <scope>IDENTIFICATION BY MASS SPECTROMETRY [LARGE SCALE ANALYSIS]</scope>
</reference>
<reference key="38">
    <citation type="journal article" date="2010" name="PLoS ONE">
        <title>Development and validation of a method for profiling post-translational modification activities using protein microarrays.</title>
        <authorList>
            <person name="Del Rincon S.V."/>
            <person name="Rogers J."/>
            <person name="Widschwendter M."/>
            <person name="Sun D."/>
            <person name="Sieburg H.B."/>
            <person name="Spruck C."/>
        </authorList>
    </citation>
    <scope>SUMOYLATION</scope>
</reference>
<reference key="39">
    <citation type="journal article" date="2010" name="Sci. Signal.">
        <title>Quantitative phosphoproteomics reveals widespread full phosphorylation site occupancy during mitosis.</title>
        <authorList>
            <person name="Olsen J.V."/>
            <person name="Vermeulen M."/>
            <person name="Santamaria A."/>
            <person name="Kumar C."/>
            <person name="Miller M.L."/>
            <person name="Jensen L.J."/>
            <person name="Gnad F."/>
            <person name="Cox J."/>
            <person name="Jensen T.S."/>
            <person name="Nigg E.A."/>
            <person name="Brunak S."/>
            <person name="Mann M."/>
        </authorList>
    </citation>
    <scope>IDENTIFICATION BY MASS SPECTROMETRY [LARGE SCALE ANALYSIS]</scope>
    <source>
        <tissue>Cervix carcinoma</tissue>
    </source>
</reference>
<reference key="40">
    <citation type="journal article" date="2011" name="J. Biol. Chem.">
        <title>Polyubiquitination of insulin-like growth factor I receptor (IGF-IR) activation loop promotes antibody-induced receptor internalization and down-regulation.</title>
        <authorList>
            <person name="Mao Y."/>
            <person name="Shang Y."/>
            <person name="Pham V.C."/>
            <person name="Ernst J.A."/>
            <person name="Lill J.R."/>
            <person name="Scales S.J."/>
            <person name="Zha J."/>
        </authorList>
    </citation>
    <scope>UBIQUITINATION AT LYS-1168 AND LYS-1171</scope>
</reference>
<reference key="41">
    <citation type="journal article" date="2012" name="J. Biol. Chem.">
        <title>Cross-talk between integrin alpha6beta4 and insulin-like growth factor-1 receptor (IGF1R) through direct alpha6beta4 binding to IGF1 and subsequent alpha6beta4-IGF1-IGF1R ternary complex formation in anchorage-independent conditions.</title>
        <authorList>
            <person name="Fujita M."/>
            <person name="Ieguchi K."/>
            <person name="Davari P."/>
            <person name="Yamaji S."/>
            <person name="Taniguchi Y."/>
            <person name="Sekiguchi K."/>
            <person name="Takada Y.K."/>
            <person name="Takada Y."/>
        </authorList>
    </citation>
    <scope>BINDING TO IGF1</scope>
    <scope>IDENTIFICATION IN A COMPLEX WITH INTEGRIN AND IGF1</scope>
</reference>
<reference key="42">
    <citation type="journal article" date="2016" name="Cell Res.">
        <title>mTORC2 promotes type I insulin-like growth factor receptor and insulin receptor activation through the tyrosine kinase activity of mTOR.</title>
        <authorList>
            <person name="Yin Y."/>
            <person name="Hua H."/>
            <person name="Li M."/>
            <person name="Liu S."/>
            <person name="Kong Q."/>
            <person name="Shao T."/>
            <person name="Wang J."/>
            <person name="Luo Y."/>
            <person name="Wang Q."/>
            <person name="Luo T."/>
            <person name="Jiang Y."/>
        </authorList>
    </citation>
    <scope>PHOSPHORYLATION AT TYR-1161 AND TYR-1166</scope>
</reference>
<reference key="43">
    <citation type="journal article" date="2016" name="Nat. Med.">
        <title>Loss of the proteostasis factor AIRAPL causes myeloid transformation by deregulating IGF-1 signaling.</title>
        <authorList>
            <person name="Osorio F.G."/>
            <person name="Soria-Valles C."/>
            <person name="Santiago-Fernandez O."/>
            <person name="Bernal T."/>
            <person name="Mittelbrunn M."/>
            <person name="Colado E."/>
            <person name="Rodriguez F."/>
            <person name="Bonzon-Kulichenko E."/>
            <person name="Vazquez J."/>
            <person name="Porta-de-la-Riva M."/>
            <person name="Ceron J."/>
            <person name="Fueyo A."/>
            <person name="Li J."/>
            <person name="Green A.R."/>
            <person name="Freije J.M."/>
            <person name="Lopez-Otin C."/>
        </authorList>
    </citation>
    <scope>INTERACTION WITH ZFAND2B</scope>
</reference>
<reference key="44">
    <citation type="journal article" date="2020" name="Nature">
        <title>IGF1R is an entry receptor for respiratory syncytial virus.</title>
        <authorList>
            <person name="Griffiths C.D."/>
            <person name="Bilawchuk L.M."/>
            <person name="McDonough J.E."/>
            <person name="Jamieson K.C."/>
            <person name="Elawar F."/>
            <person name="Cen Y."/>
            <person name="Duan W."/>
            <person name="Lin C."/>
            <person name="Song H."/>
            <person name="Casanova J.L."/>
            <person name="Ogg S."/>
            <person name="Jensen L.D."/>
            <person name="Thienpont B."/>
            <person name="Kumar A."/>
            <person name="Hobman T.C."/>
            <person name="Proud D."/>
            <person name="Moraes T.J."/>
            <person name="Marchant D.J."/>
        </authorList>
    </citation>
    <scope>INTERACTION WITH HRSV FUSION GLYCOPROTEIN F1/F2 HETERODIMER (MICROBIAL INFECTION)</scope>
</reference>
<reference key="45">
    <citation type="journal article" date="1998" name="Nature">
        <title>Crystal structure of the first three domains of the type-1 insulin-like growth factor receptor.</title>
        <authorList>
            <person name="Garrett T.P."/>
            <person name="McKern N.M."/>
            <person name="Lou M."/>
            <person name="Frenkel M.J."/>
            <person name="Bentley J.D."/>
            <person name="Lovrecz G.O."/>
            <person name="Elleman T.C."/>
            <person name="Cosgrove L.J."/>
            <person name="Ward C.W."/>
        </authorList>
    </citation>
    <scope>X-RAY CRYSTALLOGRAPHY (2.60 ANGSTROMS) OF 31-492</scope>
    <scope>DISULFIDE BONDS</scope>
    <scope>GLYCOSYLATION AT ASN-51; ASN-135; ASN-244 AND ASN-314</scope>
</reference>
<reference key="46">
    <citation type="journal article" date="2001" name="Nat. Struct. Biol.">
        <title>Structure and autoregulation of the insulin-like growth factor 1 receptor kinase.</title>
        <authorList>
            <person name="Favelyukis S."/>
            <person name="Till J.H."/>
            <person name="Hubbard S.R."/>
            <person name="Miller W.T."/>
        </authorList>
    </citation>
    <scope>X-RAY CRYSTALLOGRAPHY (2.10 ANGSTROMS) OF 988-1286 IN COMPLEX WITH AMP-PCP AND PEPTIDE SUBSTRATE</scope>
    <scope>CATALYTIC ACTIVITY</scope>
    <scope>ACTIVE SITE</scope>
    <scope>ACTIVITY REGULATION</scope>
    <scope>IDENTIFICATION BY MASS SPECTROMETRY</scope>
    <scope>PHOSPHORYLATION AT TYR-1161; TYR-1165 AND TYR-1166</scope>
</reference>
<reference key="47">
    <citation type="journal article" date="2001" name="Structure">
        <title>Crystal structure of bisphosphorylated IGF-1 receptor kinase: insight into domain movements upon kinase activation.</title>
        <authorList>
            <person name="Pautsch A."/>
            <person name="Zoephel A."/>
            <person name="Ahorn H."/>
            <person name="Spevak W."/>
            <person name="Hauptmann R."/>
            <person name="Nar H."/>
        </authorList>
    </citation>
    <scope>X-RAY CRYSTALLOGRAPHY (2.10 ANGSTROMS) OF 981-1286 IN COMPLEX WITH ANP</scope>
    <scope>AUTOPHOSPHORYLATION</scope>
    <scope>ACTIVE SITE</scope>
    <scope>IDENTIFICATION BY MASS SPECTROMETRY</scope>
</reference>
<reference key="48">
    <citation type="journal article" date="2002" name="J. Biol. Chem.">
        <title>Crystal structure of the Apo, unactivated insulin-like growth factor-1 receptor kinase. Implication for inhibitor specificity.</title>
        <authorList>
            <person name="Munshi S."/>
            <person name="Kornienko M."/>
            <person name="Hall D.L."/>
            <person name="Reid J.C."/>
            <person name="Waxman L."/>
            <person name="Stirdivant S.M."/>
            <person name="Darke P.L."/>
            <person name="Kuo L.C."/>
        </authorList>
    </citation>
    <scope>X-RAY CRYSTALLOGRAPHY (2.70 ANGSTROMS) OF 974-1294</scope>
</reference>
<reference key="49">
    <citation type="journal article" date="2003" name="Acta Crystallogr. D">
        <title>Structure of apo, unactivated insulin-like growth factor-1 receptor kinase at 1.5 A resolution.</title>
        <authorList>
            <person name="Munshi S."/>
            <person name="Hall D.L."/>
            <person name="Kornienko M."/>
            <person name="Darke P.L."/>
            <person name="Kuo L.C."/>
        </authorList>
    </citation>
    <scope>X-RAY CRYSTALLOGRAPHY (1.50 ANGSTROMS) OF 974-1294</scope>
</reference>
<reference key="50">
    <citation type="journal article" date="2007" name="Bioorg. Med. Chem. Lett.">
        <title>Discovery and initial SAR of 3-(1H-benzo[d]imidazol-2-yl)pyridin-2(1H)-ones as inhibitors of insulin-like growth factor 1-receptor (IGF-1R).</title>
        <authorList>
            <person name="Velaparthi U."/>
            <person name="Wittman M."/>
            <person name="Liu P."/>
            <person name="Stoffan K."/>
            <person name="Zimmermann K."/>
            <person name="Sang X."/>
            <person name="Carboni J."/>
            <person name="Li A."/>
            <person name="Attar R."/>
            <person name="Gottardis M."/>
            <person name="Greer A."/>
            <person name="Chang C.Y."/>
            <person name="Jacobsen B.L."/>
            <person name="Sack J.S."/>
            <person name="Sun Y."/>
            <person name="Langley D.R."/>
            <person name="Balasubramanian B."/>
            <person name="Vyas D."/>
        </authorList>
    </citation>
    <scope>X-RAY CRYSTALLOGRAPHY (2.00 ANGSTROMS) OF 982-1286 IN COMPLEX WITH BENZIMIDAZOLE PYRIDINONE INHIBITOR</scope>
    <scope>CATALYTIC ACTIVITY</scope>
    <scope>ACTIVITY REGULATION</scope>
</reference>
<reference key="51">
    <citation type="journal article" date="2008" name="Bioorg. Med. Chem. Lett.">
        <title>Lead identification to generate isoquinolinedione inhibitors of insulin-like growth factor receptor (IGF-1R) for potential use in cancer treatment.</title>
        <authorList>
            <person name="Mayer S.C."/>
            <person name="Banker A.L."/>
            <person name="Boschelli F."/>
            <person name="Di L."/>
            <person name="Johnson M."/>
            <person name="Kenny C.H."/>
            <person name="Krishnamurthy G."/>
            <person name="Kutterer K."/>
            <person name="Moy F."/>
            <person name="Petusky S."/>
            <person name="Ravi M."/>
            <person name="Tkach D."/>
            <person name="Tsou H.R."/>
            <person name="Xu W."/>
        </authorList>
    </citation>
    <scope>X-RAY CRYSTALLOGRAPHY (2.50 ANGSTROMS) OF 981-1286</scope>
    <scope>PHOSPHORYLATION AT TYR-1161; TYR-1165 AND TYR-1166</scope>
</reference>
<reference key="52">
    <citation type="journal article" date="2008" name="EMBO J.">
        <title>Small-molecule inhibition and activation-loop trans-phosphorylation of the IGF1 receptor.</title>
        <authorList>
            <person name="Wu J."/>
            <person name="Li W."/>
            <person name="Craddock B.P."/>
            <person name="Foreman K.W."/>
            <person name="Mulvihill M.J."/>
            <person name="Ji Q.S."/>
            <person name="Miller W.T."/>
            <person name="Hubbard S.R."/>
        </authorList>
    </citation>
    <scope>X-RAY CRYSTALLOGRAPHY (2.30 ANGSTROMS) OF 986-1286 IN COMPLEX WITH INHIBITOR PQIP</scope>
    <scope>SUBUNIT</scope>
    <scope>AUTOPHOSPHORYLATION</scope>
    <scope>CATALYTIC ACTIVITY</scope>
    <scope>ACTIVE SITE</scope>
    <scope>ACTIVITY REGULATION</scope>
</reference>
<reference key="53">
    <citation type="journal article" date="2009" name="Bioorg. Med. Chem. Lett.">
        <title>Lead identification to generate 3-cyanoquinoline inhibitors of insulin-like growth factor receptor (IGF-1R) for potential use in cancer treatment.</title>
        <authorList>
            <person name="Miller L.M."/>
            <person name="Mayer S.C."/>
            <person name="Berger D.M."/>
            <person name="Boschelli D.H."/>
            <person name="Boschelli F."/>
            <person name="Di L."/>
            <person name="Du X."/>
            <person name="Dutia M."/>
            <person name="Floyd M.B."/>
            <person name="Johnson M."/>
            <person name="Kenny C.H."/>
            <person name="Krishnamurthy G."/>
            <person name="Moy F."/>
            <person name="Petusky S."/>
            <person name="Tkach D."/>
            <person name="Torres N."/>
            <person name="Wu B."/>
            <person name="Xu W."/>
        </authorList>
    </citation>
    <scope>X-RAY CRYSTALLOGRAPHY (2.90 ANGSTROMS) OF 981-1286 IN COMPLEX WITH 3-CYANOQUINOLINE INHIBITOR</scope>
    <scope>CATALYTIC ACTIVITY</scope>
    <scope>ACTIVITY REGULATION</scope>
    <scope>PHOSPHORYLATION AT TYR-1161; TYR-1165 AND TYR-1166</scope>
</reference>
<reference key="54">
    <citation type="journal article" date="2009" name="J. Med. Chem.">
        <title>Discovery of a 2,4-disubstituted pyrrolo[1,2-f][1,2,4]triazine inhibitor (BMS-754807) of insulin-like growth factor receptor (IGF-1R) kinase in clinical development.</title>
        <authorList>
            <person name="Wittman M.D."/>
            <person name="Carboni J.M."/>
            <person name="Yang Z."/>
            <person name="Lee F.Y."/>
            <person name="Antman M."/>
            <person name="Attar R."/>
            <person name="Balimane P."/>
            <person name="Chang C."/>
            <person name="Chen C."/>
            <person name="Discenza L."/>
            <person name="Frennesson D."/>
            <person name="Gottardis M.M."/>
            <person name="Greer A."/>
            <person name="Hurlburt W."/>
            <person name="Johnson W."/>
            <person name="Langley D.R."/>
            <person name="Li A."/>
            <person name="Li J."/>
            <person name="Liu P."/>
            <person name="Mastalerz H."/>
            <person name="Mathur A."/>
            <person name="Menard K."/>
            <person name="Patel K."/>
            <person name="Sack J."/>
            <person name="Sang X."/>
            <person name="Saulnier M."/>
            <person name="Smith D."/>
            <person name="Stefanski K."/>
            <person name="Trainor G."/>
            <person name="Velaparthi U."/>
            <person name="Zhang G."/>
            <person name="Zimmermann K."/>
            <person name="Vyas D.M."/>
        </authorList>
    </citation>
    <scope>X-RAY CRYSTALLOGRAPHY (2.08 ANGSTROMS) OF 982-1286 IN COMPLEX WITH BMS-754807</scope>
    <scope>CATALYTIC ACTIVITY</scope>
    <scope>ACTIVITY REGULATION</scope>
</reference>
<reference key="55">
    <citation type="journal article" date="2010" name="ACS Med. Chem. Lett.">
        <title>Allosteric IGF-1R Inhibitors.</title>
        <authorList>
            <person name="Heinrich T."/>
            <person name="Graedler U."/>
            <person name="Boettcher H."/>
            <person name="Blaukat A."/>
            <person name="Shutes A."/>
        </authorList>
    </citation>
    <scope>X-RAY CRYSTALLOGRAPHY (1.79 ANGSTROMS) OF 983-1286 IN COMPLEX WITH MSC1609119A-1</scope>
    <scope>CATALYTIC ACTIVITY</scope>
    <scope>ACTIVITY REGULATION</scope>
</reference>
<reference key="56">
    <citation type="journal article" date="2010" name="Bioorg. Med. Chem. Lett.">
        <title>Proline isosteres in a series of 2,4-disubstituted pyrrolo[1,2-f][1,2,4]triazine inhibitors of IGF-1R kinase and IR kinase.</title>
        <authorList>
            <person name="Sampognaro A.J."/>
            <person name="Wittman M.D."/>
            <person name="Carboni J.M."/>
            <person name="Chang C."/>
            <person name="Greer A.F."/>
            <person name="Hurlburt W.W."/>
            <person name="Sack J.S."/>
            <person name="Vyas D.M."/>
        </authorList>
    </citation>
    <scope>X-RAY CRYSTALLOGRAPHY (2.11 ANGSTROMS) OF 982-1286 IN COMPLEXES WITH INHIBITORS</scope>
    <scope>CATALYTIC ACTIVITY</scope>
    <scope>ACTIVITY REGULATION</scope>
</reference>
<reference key="57">
    <citation type="journal article" date="2010" name="Chem. Biol. Drug Des.">
        <title>Design of potent IGF1-R inhibitors related to bis-azaindoles.</title>
        <authorList>
            <person name="Nemecek C."/>
            <person name="Metz W.A."/>
            <person name="Wentzler S."/>
            <person name="Ding F.X."/>
            <person name="Venot C."/>
            <person name="Souaille C."/>
            <person name="Dagallier A."/>
            <person name="Maignan S."/>
            <person name="Guilloteau J.P."/>
            <person name="Bernard F."/>
            <person name="Henry A."/>
            <person name="Grapinet S."/>
            <person name="Lesuisse D."/>
        </authorList>
    </citation>
    <scope>X-RAY CRYSTALLOGRAPHY (3.00 ANGSTROMS) OF 951-1286 IN COMPLEX WITH BIS-AZAINDOLE INHIBITOR</scope>
    <scope>AUTOPHOSPHORYLATION</scope>
    <scope>ACTIVITY REGULATION</scope>
</reference>
<reference key="58">
    <citation type="journal article" date="2011" name="Bioorg. Med. Chem. Lett.">
        <title>Discovery of the first non-ATP competitive IGF-1R kinase inhibitors: advantages in comparison with competitive inhibitors.</title>
        <authorList>
            <person name="Lesuisse D."/>
            <person name="Mauger J."/>
            <person name="Nemecek C."/>
            <person name="Maignan S."/>
            <person name="Boiziau J."/>
            <person name="Harlow G."/>
            <person name="Hittinger A."/>
            <person name="Ruf S."/>
            <person name="Strobel H."/>
            <person name="Nair A."/>
            <person name="Ritter K."/>
            <person name="Malleron J.L."/>
            <person name="Dagallier A."/>
            <person name="El-Ahmad Y."/>
            <person name="Guilloteau J.P."/>
            <person name="Guizani H."/>
            <person name="Bouchard H."/>
            <person name="Venot C."/>
        </authorList>
    </citation>
    <scope>X-RAY CRYSTALLOGRAPHY (2.10 ANGSTROMS) OF 982-1286 IN COMPLEX WITH HYDANTOIN DERIVATIVE</scope>
    <scope>CATALYTIC ACTIVITY</scope>
    <scope>ACTIVITY REGULATION</scope>
</reference>
<reference key="59">
    <citation type="journal article" date="2011" name="Bioorg. Med. Chem. Lett.">
        <title>Discovery of 2,4-bis-arylamino-1,3-pyrimidines as insulin-like growth factor-1 receptor (IGF-1R) inhibitors.</title>
        <authorList>
            <person name="Buchanan J.L."/>
            <person name="Newcomb J.R."/>
            <person name="Carney D.P."/>
            <person name="Chaffee S.C."/>
            <person name="Chai L."/>
            <person name="Cupples R."/>
            <person name="Epstein L.F."/>
            <person name="Gallant P."/>
            <person name="Gu Y."/>
            <person name="Harmange J.C."/>
            <person name="Hodge K."/>
            <person name="Houk B.E."/>
            <person name="Huang X."/>
            <person name="Jona J."/>
            <person name="Joseph S."/>
            <person name="Jun H.T."/>
            <person name="Kumar R."/>
            <person name="Li C."/>
            <person name="Lu J."/>
            <person name="Menges T."/>
            <person name="Morrison M.J."/>
            <person name="Novak P.M."/>
            <person name="van der Plas S."/>
            <person name="Radinsky R."/>
            <person name="Rose P.E."/>
            <person name="Sawant S."/>
            <person name="Sun J.R."/>
            <person name="Surapaneni S."/>
            <person name="Turci S.M."/>
            <person name="Xu K."/>
            <person name="Yanez E."/>
            <person name="Zhao H."/>
            <person name="Zhu X."/>
        </authorList>
    </citation>
    <scope>X-RAY CRYSTALLOGRAPHY (2.90 ANGSTROMS) OF 988-1286 IN COMPLEX WITH 2,4-BIS-ARYLAMINO-1,3-PYRIMIDINE INHIBITOR</scope>
    <scope>CATALYTIC ACTIVITY</scope>
    <scope>ACTIVITY REGULATION</scope>
</reference>
<reference key="60">
    <citation type="journal article" date="2003" name="N. Engl. J. Med.">
        <title>IGF-I receptor mutations resulting in intrauterine and postnatal growth retardation.</title>
        <authorList>
            <consortium name="The intrauterine growth retardation (IUGR) study group"/>
            <person name="Abuzzahab M.J."/>
            <person name="Schneider A."/>
            <person name="Goddard A."/>
            <person name="Grigorescu F."/>
            <person name="Lautier C."/>
            <person name="Keller E."/>
            <person name="Kiess W."/>
            <person name="Klammt J."/>
            <person name="Kratzsch J."/>
            <person name="Osgood D."/>
            <person name="Pfaeffle R."/>
            <person name="Raile K."/>
            <person name="Seidel B."/>
            <person name="Smith R.J."/>
            <person name="Chernausek S.D."/>
        </authorList>
    </citation>
    <scope>VARIANTS IGF1RES GLN-138 AND ASN-145</scope>
    <scope>CHARACTERIZATION OF VARIANTS IGF1RES GLN-138 AND ASN-145</scope>
</reference>
<reference key="61">
    <citation type="journal article" date="2005" name="J. Clin. Endocrinol. Metab.">
        <title>Mutation at cleavage site of insulin-like growth factor receptor in a short-stature child born with intrauterine growth retardation.</title>
        <authorList>
            <person name="Kawashima Y."/>
            <person name="Kanzaki S."/>
            <person name="Yang F."/>
            <person name="Kinoshita T."/>
            <person name="Hanaki K."/>
            <person name="Nagaishi J."/>
            <person name="Ohtsuka Y."/>
            <person name="Hisatome I."/>
            <person name="Ninomoya H."/>
            <person name="Nanba E."/>
            <person name="Fukushima T."/>
            <person name="Takahashi S."/>
        </authorList>
    </citation>
    <scope>VARIANT IGF1RES GLN-739</scope>
    <scope>CHARACTERIZATION OF VARIANT IGF1RES GLN-739</scope>
</reference>
<reference key="62">
    <citation type="journal article" date="2007" name="Nature">
        <title>Patterns of somatic mutation in human cancer genomes.</title>
        <authorList>
            <person name="Greenman C."/>
            <person name="Stephens P."/>
            <person name="Smith R."/>
            <person name="Dalgliesh G.L."/>
            <person name="Hunter C."/>
            <person name="Bignell G."/>
            <person name="Davies H."/>
            <person name="Teague J."/>
            <person name="Butler A."/>
            <person name="Stevens C."/>
            <person name="Edkins S."/>
            <person name="O'Meara S."/>
            <person name="Vastrik I."/>
            <person name="Schmidt E.E."/>
            <person name="Avis T."/>
            <person name="Barthorpe S."/>
            <person name="Bhamra G."/>
            <person name="Buck G."/>
            <person name="Choudhury B."/>
            <person name="Clements J."/>
            <person name="Cole J."/>
            <person name="Dicks E."/>
            <person name="Forbes S."/>
            <person name="Gray K."/>
            <person name="Halliday K."/>
            <person name="Harrison R."/>
            <person name="Hills K."/>
            <person name="Hinton J."/>
            <person name="Jenkinson A."/>
            <person name="Jones D."/>
            <person name="Menzies A."/>
            <person name="Mironenko T."/>
            <person name="Perry J."/>
            <person name="Raine K."/>
            <person name="Richardson D."/>
            <person name="Shepherd R."/>
            <person name="Small A."/>
            <person name="Tofts C."/>
            <person name="Varian J."/>
            <person name="Webb T."/>
            <person name="West S."/>
            <person name="Widaa S."/>
            <person name="Yates A."/>
            <person name="Cahill D.P."/>
            <person name="Louis D.N."/>
            <person name="Goldstraw P."/>
            <person name="Nicholson A.G."/>
            <person name="Brasseur F."/>
            <person name="Looijenga L."/>
            <person name="Weber B.L."/>
            <person name="Chiew Y.-E."/>
            <person name="DeFazio A."/>
            <person name="Greaves M.F."/>
            <person name="Green A.R."/>
            <person name="Campbell P."/>
            <person name="Birney E."/>
            <person name="Easton D.F."/>
            <person name="Chenevix-Trench G."/>
            <person name="Tan M.-H."/>
            <person name="Khoo S.K."/>
            <person name="Teh B.T."/>
            <person name="Yuen S.T."/>
            <person name="Leung S.Y."/>
            <person name="Wooster R."/>
            <person name="Futreal P.A."/>
            <person name="Stratton M.R."/>
        </authorList>
    </citation>
    <scope>VARIANTS [LARGE SCALE ANALYSIS] LEU-105; HIS-437; HIS-595; SER-857; THR-1338 AND VAL-1347</scope>
</reference>
<reference key="63">
    <citation type="journal article" date="2015" name="Clin. Endocrinol. (Oxf.)">
        <title>Three novel IGF1R mutations in microcephalic patients with prenatal and postnatal growth impairment.</title>
        <authorList>
            <person name="Juanes M."/>
            <person name="Guercio G."/>
            <person name="Marino R."/>
            <person name="Berensztein E."/>
            <person name="Warman D.M."/>
            <person name="Ciaccio M."/>
            <person name="Gil S."/>
            <person name="Bailez M."/>
            <person name="Rivarola M.A."/>
            <person name="Belgorosky A."/>
        </authorList>
    </citation>
    <scope>VARIANTS IGF1RES TYR-359; CYS-865; SER-1256 AND CYS-1337</scope>
    <scope>CHARACTERIZATION OF VARIANTS IGF1RES TYR-359; CYS-865; SER-1256 AND CYS-1337</scope>
</reference>
<keyword id="KW-0002">3D-structure</keyword>
<keyword id="KW-0067">ATP-binding</keyword>
<keyword id="KW-1003">Cell membrane</keyword>
<keyword id="KW-0165">Cleavage on pair of basic residues</keyword>
<keyword id="KW-0903">Direct protein sequencing</keyword>
<keyword id="KW-0225">Disease variant</keyword>
<keyword id="KW-1015">Disulfide bond</keyword>
<keyword id="KW-0325">Glycoprotein</keyword>
<keyword id="KW-0945">Host-virus interaction</keyword>
<keyword id="KW-1017">Isopeptide bond</keyword>
<keyword id="KW-0418">Kinase</keyword>
<keyword id="KW-0472">Membrane</keyword>
<keyword id="KW-0547">Nucleotide-binding</keyword>
<keyword id="KW-0597">Phosphoprotein</keyword>
<keyword id="KW-1267">Proteomics identification</keyword>
<keyword id="KW-0675">Receptor</keyword>
<keyword id="KW-1185">Reference proteome</keyword>
<keyword id="KW-0677">Repeat</keyword>
<keyword id="KW-0732">Signal</keyword>
<keyword id="KW-0808">Transferase</keyword>
<keyword id="KW-0812">Transmembrane</keyword>
<keyword id="KW-1133">Transmembrane helix</keyword>
<keyword id="KW-0829">Tyrosine-protein kinase</keyword>
<keyword id="KW-0832">Ubl conjugation</keyword>
<name>IGF1R_HUMAN</name>
<feature type="signal peptide" evidence="39 44">
    <location>
        <begin position="1"/>
        <end position="30"/>
    </location>
</feature>
<feature type="chain" id="PRO_0000016681" description="Insulin-like growth factor 1 receptor alpha chain">
    <location>
        <begin position="31"/>
        <end position="736"/>
    </location>
</feature>
<feature type="chain" id="PRO_0000016682" description="Insulin-like growth factor 1 receptor beta chain">
    <location>
        <begin position="741"/>
        <end position="1367"/>
    </location>
</feature>
<feature type="topological domain" description="Extracellular" evidence="2">
    <location>
        <begin position="741"/>
        <end position="935"/>
    </location>
</feature>
<feature type="transmembrane region" description="Helical" evidence="2">
    <location>
        <begin position="936"/>
        <end position="959"/>
    </location>
</feature>
<feature type="topological domain" description="Cytoplasmic" evidence="2">
    <location>
        <begin position="960"/>
        <end position="1367"/>
    </location>
</feature>
<feature type="domain" description="Fibronectin type-III 1" evidence="4">
    <location>
        <begin position="491"/>
        <end position="609"/>
    </location>
</feature>
<feature type="domain" description="Fibronectin type-III 2" evidence="4">
    <location>
        <begin position="610"/>
        <end position="708"/>
    </location>
</feature>
<feature type="domain" description="Fibronectin type-III 3" evidence="4">
    <location>
        <begin position="735"/>
        <end position="828"/>
    </location>
</feature>
<feature type="domain" description="Fibronectin type-III 4" evidence="4">
    <location>
        <begin position="834"/>
        <end position="927"/>
    </location>
</feature>
<feature type="domain" description="Protein kinase" evidence="3">
    <location>
        <begin position="999"/>
        <end position="1274"/>
    </location>
</feature>
<feature type="region of interest" description="Disordered" evidence="6">
    <location>
        <begin position="1288"/>
        <end position="1367"/>
    </location>
</feature>
<feature type="short sequence motif" description="IRS1- and SHC1-binding">
    <location>
        <begin position="977"/>
        <end position="980"/>
    </location>
</feature>
<feature type="compositionally biased region" description="Acidic residues" evidence="6">
    <location>
        <begin position="1290"/>
        <end position="1299"/>
    </location>
</feature>
<feature type="compositionally biased region" description="Low complexity" evidence="6">
    <location>
        <begin position="1300"/>
        <end position="1316"/>
    </location>
</feature>
<feature type="compositionally biased region" description="Basic and acidic residues" evidence="6">
    <location>
        <begin position="1317"/>
        <end position="1326"/>
    </location>
</feature>
<feature type="active site" description="Proton acceptor" evidence="3 5">
    <location>
        <position position="1135"/>
    </location>
</feature>
<feature type="binding site" evidence="3">
    <location>
        <begin position="1005"/>
        <end position="1013"/>
    </location>
    <ligand>
        <name>ATP</name>
        <dbReference type="ChEBI" id="CHEBI:30616"/>
    </ligand>
</feature>
<feature type="binding site">
    <location>
        <position position="1033"/>
    </location>
    <ligand>
        <name>ATP</name>
        <dbReference type="ChEBI" id="CHEBI:30616"/>
    </ligand>
</feature>
<feature type="modified residue" description="Phosphotyrosine" evidence="54">
    <location>
        <position position="980"/>
    </location>
</feature>
<feature type="modified residue" description="Phosphotyrosine; by autocatalysis" evidence="10 24 26 37">
    <location>
        <position position="1161"/>
    </location>
</feature>
<feature type="modified residue" description="Phosphotyrosine; by autocatalysis" evidence="10 24 26">
    <location>
        <position position="1165"/>
    </location>
</feature>
<feature type="modified residue" description="Phosphotyrosine; by autocatalysis" evidence="10 24 26 37">
    <location>
        <position position="1166"/>
    </location>
</feature>
<feature type="modified residue" description="Phosphoserine; by GSK3-beta" evidence="1">
    <location>
        <position position="1278"/>
    </location>
</feature>
<feature type="modified residue" description="Phosphoserine" evidence="1">
    <location>
        <position position="1282"/>
    </location>
</feature>
<feature type="glycosylation site" description="N-linked (GlcNAc...) asparagine" evidence="48">
    <location>
        <position position="51"/>
    </location>
</feature>
<feature type="glycosylation site" description="N-linked (GlcNAc...) asparagine" evidence="2">
    <location>
        <position position="102"/>
    </location>
</feature>
<feature type="glycosylation site" description="N-linked (GlcNAc...) asparagine" evidence="48">
    <location>
        <position position="135"/>
    </location>
</feature>
<feature type="glycosylation site" description="N-linked (GlcNAc...) asparagine" evidence="48">
    <location>
        <position position="244"/>
    </location>
</feature>
<feature type="glycosylation site" description="N-linked (GlcNAc...) asparagine" evidence="48">
    <location>
        <position position="314"/>
    </location>
</feature>
<feature type="glycosylation site" description="N-linked (GlcNAc...) asparagine" evidence="2">
    <location>
        <position position="417"/>
    </location>
</feature>
<feature type="glycosylation site" description="N-linked (GlcNAc...) asparagine" evidence="2">
    <location>
        <position position="438"/>
    </location>
</feature>
<feature type="glycosylation site" description="N-linked (GlcNAc...) asparagine" evidence="2">
    <location>
        <position position="534"/>
    </location>
</feature>
<feature type="glycosylation site" description="N-linked (GlcNAc...) asparagine" evidence="2">
    <location>
        <position position="607"/>
    </location>
</feature>
<feature type="glycosylation site" description="N-linked (GlcNAc...) asparagine" evidence="2">
    <location>
        <position position="622"/>
    </location>
</feature>
<feature type="glycosylation site" description="N-linked (GlcNAc...) asparagine" evidence="2">
    <location>
        <position position="640"/>
    </location>
</feature>
<feature type="glycosylation site" description="N-linked (GlcNAc...) asparagine" evidence="2">
    <location>
        <position position="747"/>
    </location>
</feature>
<feature type="glycosylation site" description="N-linked (GlcNAc...) asparagine" evidence="2">
    <location>
        <position position="756"/>
    </location>
</feature>
<feature type="glycosylation site" description="N-linked (GlcNAc...) asparagine" evidence="2">
    <location>
        <position position="764"/>
    </location>
</feature>
<feature type="glycosylation site" description="N-linked (GlcNAc...) asparagine" evidence="2">
    <location>
        <position position="900"/>
    </location>
</feature>
<feature type="glycosylation site" description="N-linked (GlcNAc...) asparagine" evidence="2">
    <location>
        <position position="913"/>
    </location>
</feature>
<feature type="disulfide bond" evidence="48">
    <location>
        <begin position="33"/>
        <end position="52"/>
    </location>
</feature>
<feature type="disulfide bond" evidence="48">
    <location>
        <begin position="150"/>
        <end position="178"/>
    </location>
</feature>
<feature type="disulfide bond" evidence="48">
    <location>
        <begin position="182"/>
        <end position="205"/>
    </location>
</feature>
<feature type="disulfide bond" evidence="48">
    <location>
        <begin position="192"/>
        <end position="211"/>
    </location>
</feature>
<feature type="disulfide bond" evidence="48">
    <location>
        <begin position="215"/>
        <end position="224"/>
    </location>
</feature>
<feature type="disulfide bond" evidence="48">
    <location>
        <begin position="219"/>
        <end position="230"/>
    </location>
</feature>
<feature type="disulfide bond" evidence="48">
    <location>
        <begin position="231"/>
        <end position="239"/>
    </location>
</feature>
<feature type="disulfide bond" evidence="48">
    <location>
        <begin position="235"/>
        <end position="248"/>
    </location>
</feature>
<feature type="disulfide bond" evidence="48">
    <location>
        <begin position="251"/>
        <end position="260"/>
    </location>
</feature>
<feature type="disulfide bond" evidence="48">
    <location>
        <begin position="264"/>
        <end position="276"/>
    </location>
</feature>
<feature type="disulfide bond" evidence="48">
    <location>
        <begin position="282"/>
        <end position="303"/>
    </location>
</feature>
<feature type="disulfide bond" evidence="48">
    <location>
        <begin position="307"/>
        <end position="321"/>
    </location>
</feature>
<feature type="disulfide bond" evidence="48">
    <location>
        <begin position="324"/>
        <end position="328"/>
    </location>
</feature>
<feature type="disulfide bond" evidence="48">
    <location>
        <begin position="332"/>
        <end position="353"/>
    </location>
</feature>
<feature type="disulfide bond" evidence="48">
    <location>
        <begin position="455"/>
        <end position="488"/>
    </location>
</feature>
<feature type="cross-link" description="Glycyl lysine isopeptide (Lys-Gly) (interchain with G-Cter in ubiquitin)" evidence="34">
    <location>
        <position position="1168"/>
    </location>
</feature>
<feature type="cross-link" description="Glycyl lysine isopeptide (Lys-Gly) (interchain with G-Cter in ubiquitin)" evidence="34">
    <location>
        <position position="1171"/>
    </location>
</feature>
<feature type="sequence variant" id="VAR_041424" description="In a renal chromophobe sample; somatic mutation." evidence="21">
    <original>V</original>
    <variation>L</variation>
    <location>
        <position position="105"/>
    </location>
</feature>
<feature type="sequence variant" id="VAR_034891" description="In IGF1RES; has decreased IGF1R function; dbSNP:rs121912426." evidence="15">
    <original>R</original>
    <variation>Q</variation>
    <location>
        <position position="138"/>
    </location>
</feature>
<feature type="sequence variant" id="VAR_034892" description="In IGF1RES; has decreased IGF1R function; dbSNP:rs121912427." evidence="15">
    <original>K</original>
    <variation>N</variation>
    <location>
        <position position="145"/>
    </location>
</feature>
<feature type="sequence variant" id="VAR_076247" description="In IGF1RES; significant decrease in IGF1-induced DNA synthesis and AKT1 phosphorylation in patient fibroblasts." evidence="36">
    <original>N</original>
    <variation>Y</variation>
    <location>
        <position position="359"/>
    </location>
</feature>
<feature type="sequence variant" id="VAR_018855" description="In dbSNP:rs45445894." evidence="51">
    <original>V</original>
    <variation>M</variation>
    <location>
        <position position="388"/>
    </location>
</feature>
<feature type="sequence variant" id="VAR_034893" description="In dbSNP:rs34516635." evidence="21">
    <original>R</original>
    <variation>H</variation>
    <location>
        <position position="437"/>
    </location>
</feature>
<feature type="sequence variant" id="VAR_034894" description="In dbSNP:rs33958176.">
    <original>R</original>
    <variation>Q</variation>
    <location>
        <position position="511"/>
    </location>
</feature>
<feature type="sequence variant" id="VAR_041425" description="In dbSNP:rs56248469." evidence="21">
    <original>R</original>
    <variation>H</variation>
    <location>
        <position position="595"/>
    </location>
</feature>
<feature type="sequence variant" id="VAR_018856" description="In dbSNP:rs45553041." evidence="51">
    <original>R</original>
    <variation>H</variation>
    <location>
        <position position="605"/>
    </location>
</feature>
<feature type="sequence variant" id="VAR_034895" description="In IGF1RES; leads to failure of processing of the IGF1R proreceptor to mature IGF1R; dbSNP:rs121912429." evidence="18">
    <original>R</original>
    <variation>Q</variation>
    <location>
        <position position="739"/>
    </location>
</feature>
<feature type="sequence variant" id="VAR_034896" description="In dbSNP:rs34061581.">
    <original>H</original>
    <variation>R</variation>
    <location>
        <position position="808"/>
    </location>
</feature>
<feature type="sequence variant" id="VAR_034897" description="In dbSNP:rs35224135.">
    <original>A</original>
    <variation>T</variation>
    <location>
        <position position="828"/>
    </location>
</feature>
<feature type="sequence variant" id="VAR_041426" description="In dbSNP:rs45611935." evidence="21">
    <original>N</original>
    <variation>S</variation>
    <location>
        <position position="857"/>
    </location>
</feature>
<feature type="sequence variant" id="VAR_076248" description="In IGF1RES; significant decrease in IGF1-induced DNA synthesis and AKT1 phosphorylation in patient fibroblasts." evidence="36">
    <original>Y</original>
    <variation>C</variation>
    <location>
        <position position="865"/>
    </location>
</feature>
<feature type="sequence variant" id="VAR_076249" description="In IGF1RES; significant decrease in IGF1-induced DNA synthesis and AKT1 phosphorylation in patient fibroblasts." evidence="36">
    <original>R</original>
    <variation>S</variation>
    <location>
        <position position="1256"/>
    </location>
</feature>
<feature type="sequence variant" id="VAR_076250" description="In IGF1RES; uncertain significance; significant decrease in IGF1-induced DNA synthesis; significant increase in IGF1-induced AKT1 phosphorylation in patient fibroblasts; dbSNP:rs141802822." evidence="36">
    <original>R</original>
    <variation>C</variation>
    <location>
        <position position="1337"/>
    </location>
</feature>
<feature type="sequence variant" id="VAR_041427" description="In dbSNP:rs34102392." evidence="21">
    <original>A</original>
    <variation>T</variation>
    <location>
        <position position="1338"/>
    </location>
</feature>
<feature type="sequence variant" id="VAR_041428" description="In a lung squamous cell carcinoma sample; somatic mutation." evidence="21">
    <original>A</original>
    <variation>V</variation>
    <location>
        <position position="1347"/>
    </location>
</feature>
<feature type="mutagenesis site" description="Reduces tyrosine phosphorylation. Abolishes interaction with IRS1 and SHC1. Does not abolish interaction with PIK3R1, nor with GRB10." evidence="7 41">
    <original>Y</original>
    <variation>F</variation>
    <location>
        <position position="980"/>
    </location>
</feature>
<feature type="mutagenesis site" description="Kinase inactive. Abolishes tyrosine phosphorylation and abolishes interaction with IRS1, SHC1 and PIK3R1." evidence="41">
    <original>K</original>
    <variation>A</variation>
    <location>
        <position position="1033"/>
    </location>
</feature>
<feature type="mutagenesis site" description="No effect on GRB10-binding." evidence="7">
    <original>Y</original>
    <variation>F</variation>
    <location>
        <position position="1280"/>
    </location>
</feature>
<feature type="mutagenesis site" description="No effect on GRB10-binding." evidence="7">
    <original>Y</original>
    <variation>F</variation>
    <location>
        <position position="1281"/>
    </location>
</feature>
<feature type="mutagenesis site" description="Loss of GRB10-binding." evidence="7">
    <original>Y</original>
    <variation>F</variation>
    <location>
        <position position="1346"/>
    </location>
</feature>
<feature type="sequence conflict" description="In Ref. 3; BAG11657." evidence="53" ref="3">
    <original>TG</original>
    <variation>R</variation>
    <location>
        <begin position="928"/>
        <end position="929"/>
    </location>
</feature>
<feature type="strand" evidence="55">
    <location>
        <begin position="37"/>
        <end position="41"/>
    </location>
</feature>
<feature type="helix" evidence="55">
    <location>
        <begin position="43"/>
        <end position="49"/>
    </location>
</feature>
<feature type="strand" evidence="55">
    <location>
        <begin position="53"/>
        <end position="57"/>
    </location>
</feature>
<feature type="strand" evidence="55">
    <location>
        <begin position="59"/>
        <end position="65"/>
    </location>
</feature>
<feature type="strand" evidence="55">
    <location>
        <begin position="68"/>
        <end position="70"/>
    </location>
</feature>
<feature type="strand" evidence="55">
    <location>
        <begin position="80"/>
        <end position="83"/>
    </location>
</feature>
<feature type="strand" evidence="55">
    <location>
        <begin position="85"/>
        <end position="92"/>
    </location>
</feature>
<feature type="helix" evidence="55">
    <location>
        <begin position="96"/>
        <end position="98"/>
    </location>
</feature>
<feature type="strand" evidence="55">
    <location>
        <begin position="115"/>
        <end position="121"/>
    </location>
</feature>
<feature type="strand" evidence="55">
    <location>
        <begin position="138"/>
        <end position="144"/>
    </location>
</feature>
<feature type="strand" evidence="68">
    <location>
        <begin position="150"/>
        <end position="152"/>
    </location>
</feature>
<feature type="helix" evidence="55">
    <location>
        <begin position="157"/>
        <end position="160"/>
    </location>
</feature>
<feature type="helix" evidence="55">
    <location>
        <begin position="164"/>
        <end position="166"/>
    </location>
</feature>
<feature type="strand" evidence="55">
    <location>
        <begin position="168"/>
        <end position="171"/>
    </location>
</feature>
<feature type="helix" evidence="55">
    <location>
        <begin position="175"/>
        <end position="178"/>
    </location>
</feature>
<feature type="turn" evidence="55">
    <location>
        <begin position="183"/>
        <end position="188"/>
    </location>
</feature>
<feature type="strand" evidence="55">
    <location>
        <begin position="194"/>
        <end position="199"/>
    </location>
</feature>
<feature type="strand" evidence="55">
    <location>
        <begin position="201"/>
        <end position="203"/>
    </location>
</feature>
<feature type="strand" evidence="55">
    <location>
        <begin position="205"/>
        <end position="209"/>
    </location>
</feature>
<feature type="helix" evidence="55">
    <location>
        <begin position="217"/>
        <end position="219"/>
    </location>
</feature>
<feature type="strand" evidence="65">
    <location>
        <begin position="222"/>
        <end position="224"/>
    </location>
</feature>
<feature type="helix" evidence="66">
    <location>
        <begin position="226"/>
        <end position="228"/>
    </location>
</feature>
<feature type="strand" evidence="55">
    <location>
        <begin position="235"/>
        <end position="241"/>
    </location>
</feature>
<feature type="strand" evidence="55">
    <location>
        <begin position="247"/>
        <end position="255"/>
    </location>
</feature>
<feature type="strand" evidence="55">
    <location>
        <begin position="257"/>
        <end position="263"/>
    </location>
</feature>
<feature type="strand" evidence="55">
    <location>
        <begin position="269"/>
        <end position="271"/>
    </location>
</feature>
<feature type="turn" evidence="55">
    <location>
        <begin position="272"/>
        <end position="274"/>
    </location>
</feature>
<feature type="strand" evidence="55">
    <location>
        <begin position="275"/>
        <end position="277"/>
    </location>
</feature>
<feature type="helix" evidence="55">
    <location>
        <begin position="279"/>
        <end position="283"/>
    </location>
</feature>
<feature type="strand" evidence="55">
    <location>
        <begin position="297"/>
        <end position="299"/>
    </location>
</feature>
<feature type="strand" evidence="55">
    <location>
        <begin position="302"/>
        <end position="306"/>
    </location>
</feature>
<feature type="strand" evidence="55">
    <location>
        <begin position="311"/>
        <end position="315"/>
    </location>
</feature>
<feature type="strand" evidence="55">
    <location>
        <begin position="321"/>
        <end position="323"/>
    </location>
</feature>
<feature type="strand" evidence="55">
    <location>
        <begin position="325"/>
        <end position="327"/>
    </location>
</feature>
<feature type="strand" evidence="55">
    <location>
        <begin position="331"/>
        <end position="341"/>
    </location>
</feature>
<feature type="helix" evidence="55">
    <location>
        <begin position="345"/>
        <end position="347"/>
    </location>
</feature>
<feature type="turn" evidence="55">
    <location>
        <begin position="349"/>
        <end position="352"/>
    </location>
</feature>
<feature type="strand" evidence="55">
    <location>
        <begin position="354"/>
        <end position="362"/>
    </location>
</feature>
<feature type="helix" evidence="55">
    <location>
        <begin position="375"/>
        <end position="378"/>
    </location>
</feature>
<feature type="strand" evidence="55">
    <location>
        <begin position="383"/>
        <end position="386"/>
    </location>
</feature>
<feature type="strand" evidence="55">
    <location>
        <begin position="388"/>
        <end position="392"/>
    </location>
</feature>
<feature type="strand" evidence="66">
    <location>
        <begin position="397"/>
        <end position="399"/>
    </location>
</feature>
<feature type="turn" evidence="55">
    <location>
        <begin position="415"/>
        <end position="417"/>
    </location>
</feature>
<feature type="strand" evidence="55">
    <location>
        <begin position="418"/>
        <end position="423"/>
    </location>
</feature>
<feature type="turn" evidence="55">
    <location>
        <begin position="434"/>
        <end position="436"/>
    </location>
</feature>
<feature type="strand" evidence="55">
    <location>
        <begin position="440"/>
        <end position="443"/>
    </location>
</feature>
<feature type="strand" evidence="55">
    <location>
        <begin position="445"/>
        <end position="451"/>
    </location>
</feature>
<feature type="strand" evidence="64">
    <location>
        <begin position="452"/>
        <end position="454"/>
    </location>
</feature>
<feature type="helix" evidence="55">
    <location>
        <begin position="456"/>
        <end position="466"/>
    </location>
</feature>
<feature type="turn" evidence="65">
    <location>
        <begin position="469"/>
        <end position="471"/>
    </location>
</feature>
<feature type="strand" evidence="55">
    <location>
        <begin position="474"/>
        <end position="477"/>
    </location>
</feature>
<feature type="turn" evidence="55">
    <location>
        <begin position="479"/>
        <end position="481"/>
    </location>
</feature>
<feature type="strand" evidence="65">
    <location>
        <begin position="482"/>
        <end position="485"/>
    </location>
</feature>
<feature type="strand" evidence="65">
    <location>
        <begin position="491"/>
        <end position="493"/>
    </location>
</feature>
<feature type="strand" evidence="65">
    <location>
        <begin position="495"/>
        <end position="500"/>
    </location>
</feature>
<feature type="strand" evidence="65">
    <location>
        <begin position="505"/>
        <end position="509"/>
    </location>
</feature>
<feature type="helix" evidence="68">
    <location>
        <begin position="517"/>
        <end position="519"/>
    </location>
</feature>
<feature type="strand" evidence="65">
    <location>
        <begin position="520"/>
        <end position="529"/>
    </location>
</feature>
<feature type="strand" evidence="65">
    <location>
        <begin position="531"/>
        <end position="533"/>
    </location>
</feature>
<feature type="strand" evidence="68">
    <location>
        <begin position="543"/>
        <end position="546"/>
    </location>
</feature>
<feature type="strand" evidence="65">
    <location>
        <begin position="550"/>
        <end position="552"/>
    </location>
</feature>
<feature type="strand" evidence="65">
    <location>
        <begin position="565"/>
        <end position="568"/>
    </location>
</feature>
<feature type="strand" evidence="65">
    <location>
        <begin position="576"/>
        <end position="586"/>
    </location>
</feature>
<feature type="strand" evidence="65">
    <location>
        <begin position="591"/>
        <end position="593"/>
    </location>
</feature>
<feature type="strand" evidence="65">
    <location>
        <begin position="597"/>
        <end position="599"/>
    </location>
</feature>
<feature type="strand" evidence="65">
    <location>
        <begin position="602"/>
        <end position="605"/>
    </location>
</feature>
<feature type="strand" evidence="65">
    <location>
        <begin position="615"/>
        <end position="620"/>
    </location>
</feature>
<feature type="strand" evidence="65">
    <location>
        <begin position="626"/>
        <end position="632"/>
    </location>
</feature>
<feature type="strand" evidence="68">
    <location>
        <begin position="634"/>
        <end position="636"/>
    </location>
</feature>
<feature type="strand" evidence="65">
    <location>
        <begin position="644"/>
        <end position="650"/>
    </location>
</feature>
<feature type="strand" evidence="65">
    <location>
        <begin position="655"/>
        <end position="660"/>
    </location>
</feature>
<feature type="turn" evidence="65">
    <location>
        <begin position="662"/>
        <end position="664"/>
    </location>
</feature>
<feature type="helix" evidence="63">
    <location>
        <begin position="724"/>
        <end position="730"/>
    </location>
</feature>
<feature type="strand" evidence="65">
    <location>
        <begin position="777"/>
        <end position="782"/>
    </location>
</feature>
<feature type="strand" evidence="65">
    <location>
        <begin position="786"/>
        <end position="792"/>
    </location>
</feature>
<feature type="strand" evidence="65">
    <location>
        <begin position="798"/>
        <end position="805"/>
    </location>
</feature>
<feature type="helix" evidence="65">
    <location>
        <begin position="810"/>
        <end position="813"/>
    </location>
</feature>
<feature type="strand" evidence="65">
    <location>
        <begin position="821"/>
        <end position="824"/>
    </location>
</feature>
<feature type="turn" evidence="68">
    <location>
        <begin position="829"/>
        <end position="832"/>
    </location>
</feature>
<feature type="strand" evidence="65">
    <location>
        <begin position="839"/>
        <end position="843"/>
    </location>
</feature>
<feature type="turn" evidence="65">
    <location>
        <begin position="844"/>
        <end position="846"/>
    </location>
</feature>
<feature type="strand" evidence="65">
    <location>
        <begin position="847"/>
        <end position="851"/>
    </location>
</feature>
<feature type="strand" evidence="65">
    <location>
        <begin position="862"/>
        <end position="873"/>
    </location>
</feature>
<feature type="strand" evidence="65">
    <location>
        <begin position="876"/>
        <end position="881"/>
    </location>
</feature>
<feature type="helix" evidence="65">
    <location>
        <begin position="882"/>
        <end position="888"/>
    </location>
</feature>
<feature type="strand" evidence="65">
    <location>
        <begin position="889"/>
        <end position="893"/>
    </location>
</feature>
<feature type="strand" evidence="65">
    <location>
        <begin position="898"/>
        <end position="911"/>
    </location>
</feature>
<feature type="strand" evidence="65">
    <location>
        <begin position="920"/>
        <end position="924"/>
    </location>
</feature>
<feature type="helix" evidence="67">
    <location>
        <begin position="933"/>
        <end position="960"/>
    </location>
</feature>
<feature type="strand" evidence="56">
    <location>
        <begin position="980"/>
        <end position="982"/>
    </location>
</feature>
<feature type="helix" evidence="58">
    <location>
        <begin position="983"/>
        <end position="985"/>
    </location>
</feature>
<feature type="turn" evidence="57">
    <location>
        <begin position="990"/>
        <end position="992"/>
    </location>
</feature>
<feature type="helix" evidence="56">
    <location>
        <begin position="996"/>
        <end position="998"/>
    </location>
</feature>
<feature type="strand" evidence="56">
    <location>
        <begin position="999"/>
        <end position="1007"/>
    </location>
</feature>
<feature type="strand" evidence="56">
    <location>
        <begin position="1009"/>
        <end position="1022"/>
    </location>
</feature>
<feature type="strand" evidence="56">
    <location>
        <begin position="1025"/>
        <end position="1034"/>
    </location>
</feature>
<feature type="strand" evidence="60">
    <location>
        <begin position="1037"/>
        <end position="1039"/>
    </location>
</feature>
<feature type="helix" evidence="56">
    <location>
        <begin position="1041"/>
        <end position="1053"/>
    </location>
</feature>
<feature type="helix" evidence="56">
    <location>
        <begin position="1054"/>
        <end position="1056"/>
    </location>
</feature>
<feature type="strand" evidence="56">
    <location>
        <begin position="1065"/>
        <end position="1069"/>
    </location>
</feature>
<feature type="strand" evidence="56">
    <location>
        <begin position="1071"/>
        <end position="1074"/>
    </location>
</feature>
<feature type="strand" evidence="56">
    <location>
        <begin position="1076"/>
        <end position="1080"/>
    </location>
</feature>
<feature type="helix" evidence="56">
    <location>
        <begin position="1087"/>
        <end position="1100"/>
    </location>
</feature>
<feature type="helix" evidence="56">
    <location>
        <begin position="1109"/>
        <end position="1128"/>
    </location>
</feature>
<feature type="helix" evidence="56">
    <location>
        <begin position="1138"/>
        <end position="1140"/>
    </location>
</feature>
<feature type="strand" evidence="56">
    <location>
        <begin position="1141"/>
        <end position="1143"/>
    </location>
</feature>
<feature type="strand" evidence="56">
    <location>
        <begin position="1149"/>
        <end position="1151"/>
    </location>
</feature>
<feature type="helix" evidence="59">
    <location>
        <begin position="1155"/>
        <end position="1157"/>
    </location>
</feature>
<feature type="helix" evidence="56">
    <location>
        <begin position="1159"/>
        <end position="1164"/>
    </location>
</feature>
<feature type="turn" evidence="61">
    <location>
        <begin position="1165"/>
        <end position="1167"/>
    </location>
</feature>
<feature type="helix" evidence="56">
    <location>
        <begin position="1168"/>
        <end position="1170"/>
    </location>
</feature>
<feature type="strand" evidence="56">
    <location>
        <begin position="1171"/>
        <end position="1174"/>
    </location>
</feature>
<feature type="helix" evidence="56">
    <location>
        <begin position="1176"/>
        <end position="1178"/>
    </location>
</feature>
<feature type="helix" evidence="56">
    <location>
        <begin position="1181"/>
        <end position="1186"/>
    </location>
</feature>
<feature type="helix" evidence="56">
    <location>
        <begin position="1191"/>
        <end position="1207"/>
    </location>
</feature>
<feature type="turn" evidence="56">
    <location>
        <begin position="1212"/>
        <end position="1215"/>
    </location>
</feature>
<feature type="helix" evidence="56">
    <location>
        <begin position="1218"/>
        <end position="1226"/>
    </location>
</feature>
<feature type="helix" evidence="56">
    <location>
        <begin position="1239"/>
        <end position="1248"/>
    </location>
</feature>
<feature type="helix" evidence="56">
    <location>
        <begin position="1253"/>
        <end position="1255"/>
    </location>
</feature>
<feature type="helix" evidence="56">
    <location>
        <begin position="1259"/>
        <end position="1266"/>
    </location>
</feature>
<feature type="helix" evidence="56">
    <location>
        <begin position="1267"/>
        <end position="1269"/>
    </location>
</feature>
<feature type="helix" evidence="56">
    <location>
        <begin position="1274"/>
        <end position="1277"/>
    </location>
</feature>
<feature type="turn" evidence="62">
    <location>
        <begin position="1279"/>
        <end position="1281"/>
    </location>
</feature>
<feature type="turn" evidence="61">
    <location>
        <begin position="1283"/>
        <end position="1285"/>
    </location>
</feature>
<feature type="strand" evidence="56">
    <location>
        <begin position="1286"/>
        <end position="1288"/>
    </location>
</feature>
<accession>P08069</accession>
<accession>B1B5Y2</accession>
<accession>Q14CV2</accession>
<accession>Q9UCC0</accession>
<protein>
    <recommendedName>
        <fullName>Insulin-like growth factor 1 receptor</fullName>
        <ecNumber>2.7.10.1</ecNumber>
    </recommendedName>
    <alternativeName>
        <fullName>Insulin-like growth factor I receptor</fullName>
        <shortName>IGF-I receptor</shortName>
    </alternativeName>
    <cdAntigenName>CD221</cdAntigenName>
    <component>
        <recommendedName>
            <fullName>Insulin-like growth factor 1 receptor alpha chain</fullName>
        </recommendedName>
    </component>
    <component>
        <recommendedName>
            <fullName>Insulin-like growth factor 1 receptor beta chain</fullName>
        </recommendedName>
    </component>
</protein>
<sequence length="1367" mass="154793">MKSGSGGGSPTSLWGLLFLSAALSLWPTSGEICGPGIDIRNDYQQLKRLENCTVIEGYLHILLISKAEDYRSYRFPKLTVITEYLLLFRVAGLESLGDLFPNLTVIRGWKLFYNYALVIFEMTNLKDIGLYNLRNITRGAIRIEKNADLCYLSTVDWSLILDAVSNNYIVGNKPPKECGDLCPGTMEEKPMCEKTTINNEYNYRCWTTNRCQKMCPSTCGKRACTENNECCHPECLGSCSAPDNDTACVACRHYYYAGVCVPACPPNTYRFEGWRCVDRDFCANILSAESSDSEGFVIHDGECMQECPSGFIRNGSQSMYCIPCEGPCPKVCEEEKKTKTIDSVTSAQMLQGCTIFKGNLLINIRRGNNIASELENFMGLIEVVTGYVKIRHSHALVSLSFLKNLRLILGEEQLEGNYSFYVLDNQNLQQLWDWDHRNLTIKAGKMYFAFNPKLCVSEIYRMEEVTGTKGRQSKGDINTRNNGERASCESDVLHFTSTTTSKNRIIITWHRYRPPDYRDLISFTVYYKEAPFKNVTEYDGQDACGSNSWNMVDVDLPPNKDVEPGILLHGLKPWTQYAVYVKAVTLTMVENDHIRGAKSEILYIRTNASVPSIPLDVLSASNSSSQLIVKWNPPSLPNGNLSYYIVRWQRQPQDGYLYRHNYCSKDKIPIRKYADGTIDIEEVTENPKTEVCGGEKGPCCACPKTEAEKQAEKEEAEYRKVFENFLHNSIFVPRPERKRRDVMQVANTTMSSRSRNTTAADTYNITDPEELETEYPFFESRVDNKERTVISNLRPFTLYRIDIHSCNHEAEKLGCSASNFVFARTMPAEGADDIPGPVTWEPRPENSIFLKWPEPENPNGLILMYEIKYGSQVEDQRECVSRQEYRKYGGAKLNRLNPGNYTARIQATSLSGNGSWTDPVFFYVQAKTGYENFIHLIIALPVAVLLIVGGLVIMLYVFHRKRNNSRLGNGVLYASVNPEYFSAADVYVPDEWEVAREKITMSRELGQGSFGMVYEGVAKGVVKDEPETRVAIKTVNEAASMRERIEFLNEASVMKEFNCHHVVRLLGVVSQGQPTLVIMELMTRGDLKSYLRSLRPEMENNPVLAPPSLSKMIQMAGEIADGMAYLNANKFVHRDLAARNCMVAEDFTVKIGDFGMTRDIYETDYYRKGGKGLLPVRWMSPESLKDGVFTTYSDVWSFGVVLWEIATLAEQPYQGLSNEQVLRFVMEGGLLDKPDNCPDMLFELMRMCWQYNPKMRPSFLEIISSIKEEMEPGFREVSFYYSEENKLPEPEELDLEPENMESVPLDPSASSSSLPLPDRHSGHKAENGPGPGVLVLRASFDERQPYAHMNGGRKNERALPLPQSSTC</sequence>